<proteinExistence type="evidence at protein level"/>
<accession>P30153</accession>
<accession>Q13773</accession>
<accession>Q6ICQ3</accession>
<accession>Q96DH3</accession>
<keyword id="KW-0002">3D-structure</keyword>
<keyword id="KW-0007">Acetylation</keyword>
<keyword id="KW-1003">Cell membrane</keyword>
<keyword id="KW-0966">Cell projection</keyword>
<keyword id="KW-0137">Centromere</keyword>
<keyword id="KW-0158">Chromosome</keyword>
<keyword id="KW-0159">Chromosome partition</keyword>
<keyword id="KW-0963">Cytoplasm</keyword>
<keyword id="KW-0903">Direct protein sequencing</keyword>
<keyword id="KW-0225">Disease variant</keyword>
<keyword id="KW-0945">Host-virus interaction</keyword>
<keyword id="KW-0991">Intellectual disability</keyword>
<keyword id="KW-0472">Membrane</keyword>
<keyword id="KW-0539">Nucleus</keyword>
<keyword id="KW-1267">Proteomics identification</keyword>
<keyword id="KW-1185">Reference proteome</keyword>
<keyword id="KW-0677">Repeat</keyword>
<evidence type="ECO:0000250" key="1">
    <source>
        <dbReference type="UniProtKB" id="Q32PI5"/>
    </source>
</evidence>
<evidence type="ECO:0000250" key="2">
    <source>
        <dbReference type="UniProtKB" id="Q76MZ3"/>
    </source>
</evidence>
<evidence type="ECO:0000269" key="3">
    <source>
    </source>
</evidence>
<evidence type="ECO:0000269" key="4">
    <source>
    </source>
</evidence>
<evidence type="ECO:0000269" key="5">
    <source>
    </source>
</evidence>
<evidence type="ECO:0000269" key="6">
    <source>
    </source>
</evidence>
<evidence type="ECO:0000269" key="7">
    <source>
    </source>
</evidence>
<evidence type="ECO:0000269" key="8">
    <source>
    </source>
</evidence>
<evidence type="ECO:0000269" key="9">
    <source>
    </source>
</evidence>
<evidence type="ECO:0000269" key="10">
    <source>
    </source>
</evidence>
<evidence type="ECO:0000269" key="11">
    <source>
    </source>
</evidence>
<evidence type="ECO:0000269" key="12">
    <source>
    </source>
</evidence>
<evidence type="ECO:0000269" key="13">
    <source>
    </source>
</evidence>
<evidence type="ECO:0000269" key="14">
    <source>
    </source>
</evidence>
<evidence type="ECO:0000269" key="15">
    <source>
    </source>
</evidence>
<evidence type="ECO:0000269" key="16">
    <source>
    </source>
</evidence>
<evidence type="ECO:0000269" key="17">
    <source>
    </source>
</evidence>
<evidence type="ECO:0000269" key="18">
    <source>
    </source>
</evidence>
<evidence type="ECO:0000269" key="19">
    <source>
    </source>
</evidence>
<evidence type="ECO:0000269" key="20">
    <source>
    </source>
</evidence>
<evidence type="ECO:0000269" key="21">
    <source>
    </source>
</evidence>
<evidence type="ECO:0000269" key="22">
    <source>
    </source>
</evidence>
<evidence type="ECO:0000269" key="23">
    <source>
    </source>
</evidence>
<evidence type="ECO:0000269" key="24">
    <source>
    </source>
</evidence>
<evidence type="ECO:0000269" key="25">
    <source>
    </source>
</evidence>
<evidence type="ECO:0000269" key="26">
    <source>
    </source>
</evidence>
<evidence type="ECO:0000269" key="27">
    <source>
    </source>
</evidence>
<evidence type="ECO:0000303" key="28">
    <source>
    </source>
</evidence>
<evidence type="ECO:0000305" key="29"/>
<evidence type="ECO:0000312" key="30">
    <source>
        <dbReference type="HGNC" id="HGNC:9302"/>
    </source>
</evidence>
<evidence type="ECO:0007744" key="31">
    <source>
        <dbReference type="PDB" id="7CUN"/>
    </source>
</evidence>
<evidence type="ECO:0007744" key="32">
    <source>
        <dbReference type="PDB" id="7K36"/>
    </source>
</evidence>
<evidence type="ECO:0007744" key="33">
    <source>
        <dbReference type="PDB" id="7PKS"/>
    </source>
</evidence>
<evidence type="ECO:0007744" key="34">
    <source>
        <dbReference type="PDB" id="7YCX"/>
    </source>
</evidence>
<evidence type="ECO:0007744" key="35">
    <source>
        <dbReference type="PDB" id="8RBX"/>
    </source>
</evidence>
<evidence type="ECO:0007744" key="36">
    <source>
        <dbReference type="PDB" id="8RBZ"/>
    </source>
</evidence>
<evidence type="ECO:0007744" key="37">
    <source>
        <dbReference type="PDB" id="8RC4"/>
    </source>
</evidence>
<evidence type="ECO:0007744" key="38">
    <source>
        <dbReference type="PDB" id="8SO0"/>
    </source>
</evidence>
<evidence type="ECO:0007744" key="39">
    <source>
        <dbReference type="PDB" id="8TTB"/>
    </source>
</evidence>
<evidence type="ECO:0007744" key="40">
    <source>
        <dbReference type="PDB" id="8TWE"/>
    </source>
</evidence>
<evidence type="ECO:0007744" key="41">
    <source>
        <dbReference type="PDB" id="8TWI"/>
    </source>
</evidence>
<evidence type="ECO:0007744" key="42">
    <source>
    </source>
</evidence>
<evidence type="ECO:0007744" key="43">
    <source>
    </source>
</evidence>
<evidence type="ECO:0007744" key="44">
    <source>
    </source>
</evidence>
<evidence type="ECO:0007744" key="45">
    <source>
    </source>
</evidence>
<evidence type="ECO:0007744" key="46">
    <source>
    </source>
</evidence>
<evidence type="ECO:0007829" key="47">
    <source>
        <dbReference type="PDB" id="1B3U"/>
    </source>
</evidence>
<evidence type="ECO:0007829" key="48">
    <source>
        <dbReference type="PDB" id="2IE4"/>
    </source>
</evidence>
<evidence type="ECO:0007829" key="49">
    <source>
        <dbReference type="PDB" id="2PKG"/>
    </source>
</evidence>
<evidence type="ECO:0007829" key="50">
    <source>
        <dbReference type="PDB" id="6IUR"/>
    </source>
</evidence>
<evidence type="ECO:0007829" key="51">
    <source>
        <dbReference type="PDB" id="7CUN"/>
    </source>
</evidence>
<evidence type="ECO:0007829" key="52">
    <source>
        <dbReference type="PDB" id="7K36"/>
    </source>
</evidence>
<evidence type="ECO:0007829" key="53">
    <source>
        <dbReference type="PDB" id="7SOY"/>
    </source>
</evidence>
<sequence length="589" mass="65309">MAAADGDDSLYPIAVLIDELRNEDVQLRLNSIKKLSTIALALGVERTRSELLPFLTDTIYDEDEVLLALAEQLGTFTTLVGGPEYVHCLLPPLESLATVEETVVRDKAVESLRAISHEHSPSDLEAHFVPLVKRLAGGDWFTSRTSACGLFSVCYPRVSSAVKAELRQYFRNLCSDDTPMVRRAAASKLGEFAKVLELDNVKSEIIPMFSNLASDEQDSVRLLAVEACVNIAQLLPQEDLEALVMPTLRQAAEDKSWRVRYMVADKFTELQKAVGPEITKTDLVPAFQNLMKDCEAEVRAAASHKVKEFCENLSADCRENVIMSQILPCIKELVSDANQHVKSALASVIMGLSPILGKDNTIEHLLPLFLAQLKDECPEVRLNIISNLDCVNEVIGIRQLSQSLLPAIVELAEDAKWRVRLAIIEYMPLLAGQLGVEFFDEKLNSLCMAWLVDHVYAIREAATSNLKKLVEKFGKEWAHATIIPKVLAMSGDPNYLHRMTTLFCINVLSEVCGQDITTKHMLPTVLRMAGDPVANVRFNVAKSLQKIGPILDNSTLQSEVKPILEKLTQDQDVDVKYFAQEALTVLSLA</sequence>
<organism>
    <name type="scientific">Homo sapiens</name>
    <name type="common">Human</name>
    <dbReference type="NCBI Taxonomy" id="9606"/>
    <lineage>
        <taxon>Eukaryota</taxon>
        <taxon>Metazoa</taxon>
        <taxon>Chordata</taxon>
        <taxon>Craniata</taxon>
        <taxon>Vertebrata</taxon>
        <taxon>Euteleostomi</taxon>
        <taxon>Mammalia</taxon>
        <taxon>Eutheria</taxon>
        <taxon>Euarchontoglires</taxon>
        <taxon>Primates</taxon>
        <taxon>Haplorrhini</taxon>
        <taxon>Catarrhini</taxon>
        <taxon>Hominidae</taxon>
        <taxon>Homo</taxon>
    </lineage>
</organism>
<name>2AAA_HUMAN</name>
<gene>
    <name evidence="30" type="primary">PPP2R1A</name>
</gene>
<feature type="initiator methionine" description="Removed" evidence="42 44 45 46">
    <location>
        <position position="1"/>
    </location>
</feature>
<feature type="chain" id="PRO_0000071400" description="Serine/threonine-protein phosphatase 2A 65 kDa regulatory subunit A alpha isoform">
    <location>
        <begin position="2"/>
        <end position="589"/>
    </location>
</feature>
<feature type="repeat" description="HEAT 1" evidence="25 38 39">
    <location>
        <begin position="8"/>
        <end position="46"/>
    </location>
</feature>
<feature type="repeat" description="HEAT 2" evidence="25 38 39">
    <location>
        <begin position="47"/>
        <end position="84"/>
    </location>
</feature>
<feature type="repeat" description="HEAT 3" evidence="25 38 39">
    <location>
        <begin position="85"/>
        <end position="123"/>
    </location>
</feature>
<feature type="repeat" description="HEAT 4" evidence="25 38 39">
    <location>
        <begin position="124"/>
        <end position="161"/>
    </location>
</feature>
<feature type="repeat" description="HEAT 5" evidence="25 38 39">
    <location>
        <begin position="162"/>
        <end position="200"/>
    </location>
</feature>
<feature type="repeat" description="HEAT 6" evidence="25 38 39">
    <location>
        <begin position="201"/>
        <end position="239"/>
    </location>
</feature>
<feature type="repeat" description="HEAT 7" evidence="25 38 39">
    <location>
        <begin position="240"/>
        <end position="278"/>
    </location>
</feature>
<feature type="repeat" description="HEAT 8" evidence="25 38 39">
    <location>
        <begin position="279"/>
        <end position="321"/>
    </location>
</feature>
<feature type="repeat" description="HEAT 9" evidence="25 38 39">
    <location>
        <begin position="322"/>
        <end position="360"/>
    </location>
</feature>
<feature type="repeat" description="HEAT 10" evidence="25 38 39">
    <location>
        <begin position="361"/>
        <end position="399"/>
    </location>
</feature>
<feature type="repeat" description="HEAT 11" evidence="25 38 39">
    <location>
        <begin position="400"/>
        <end position="438"/>
    </location>
</feature>
<feature type="repeat" description="HEAT 12" evidence="25 38 39">
    <location>
        <begin position="439"/>
        <end position="477"/>
    </location>
</feature>
<feature type="repeat" description="HEAT 13" evidence="25 38 39">
    <location>
        <begin position="478"/>
        <end position="516"/>
    </location>
</feature>
<feature type="repeat" description="HEAT 14" evidence="25 38 39">
    <location>
        <begin position="517"/>
        <end position="555"/>
    </location>
</feature>
<feature type="repeat" description="HEAT 15" evidence="25 38 39">
    <location>
        <begin position="556"/>
        <end position="589"/>
    </location>
</feature>
<feature type="region of interest" description="PP2A subunit B binding">
    <location>
        <begin position="8"/>
        <end position="399"/>
    </location>
</feature>
<feature type="region of interest" description="Polyoma small and medium T antigens Binding">
    <location>
        <begin position="47"/>
        <end position="321"/>
    </location>
</feature>
<feature type="region of interest" description="SV40 small T antigen binding">
    <location>
        <begin position="85"/>
        <end position="239"/>
    </location>
</feature>
<feature type="region of interest" description="PP2A subunit C binding">
    <location>
        <begin position="400"/>
        <end position="589"/>
    </location>
</feature>
<feature type="modified residue" description="N-acetylalanine" evidence="42 44 45 46">
    <location>
        <position position="2"/>
    </location>
</feature>
<feature type="modified residue" description="N6-acetyllysine" evidence="43">
    <location>
        <position position="280"/>
    </location>
</feature>
<feature type="sequence variant" id="VAR_073718" description="In HJS2." evidence="13">
    <original>V</original>
    <variation>L</variation>
    <location>
        <position position="132"/>
    </location>
</feature>
<feature type="sequence variant" id="VAR_074488" description="In HJS2; reduces PPP2CA binding; reduces PPP2R5A binding; reduces PPP2R5C binding; does not affect PPP2R5D binding; reduces PPP2R2A binding; reduces PPP2R2B binding; does not affect PPP2R3A binding; decreases phosphatase activity of PPP2CA; dbSNP:rs786205228." evidence="14">
    <original>P</original>
    <variation>L</variation>
    <location>
        <position position="179"/>
    </location>
</feature>
<feature type="sequence variant" id="VAR_088637" description="In HJS2; likely pathogenic; disrupts interaction with PPP2R5D and impairs interaction with PPP2CA; dbSNP:rs1600167941." evidence="24">
    <original>M</original>
    <variation>T</variation>
    <location>
        <position position="180"/>
    </location>
</feature>
<feature type="sequence variant" id="VAR_088638" description="In HJS2; likely pathogenic; dbSNP:rs2122334663." evidence="24">
    <original>M</original>
    <variation>V</variation>
    <location>
        <position position="180"/>
    </location>
</feature>
<feature type="sequence variant" id="VAR_074489" description="In HJS2; reduces PPP2CA binding; reduces PPP2R5A binding; reduces PPP2R5C binding; does not affect PPP2R5D binding; reduces PPP2R2A binding; reduces PPP2R2B binding; reduces PPP2R3A binding; decreases phosphatase activity of PPP2CA; dbSNP:rs786205227." evidence="14">
    <original>R</original>
    <variation>W</variation>
    <location>
        <position position="182"/>
    </location>
</feature>
<feature type="sequence variant" id="VAR_074490" description="In HJS2; reduces PPP2CA binding; reduces PPP2R5A binding; reduces PPP2R5C binding; does not affect PPP2R5D binding; reduces PPP2R2A binding; reduces PPP2R2B binding; reduces PPP2R3A binding; does not affect phosphatase activity of PPP2CA; dbSNP:rs863225094." evidence="14">
    <original>R</original>
    <variation>H</variation>
    <location>
        <position position="258"/>
    </location>
</feature>
<feature type="sequence variant" id="VAR_088639" description="In HJS2; uncertain significance; does not affect interaction with PPP2R5D and PPP2CA." evidence="24">
    <original>V</original>
    <variation>A</variation>
    <location>
        <position position="470"/>
    </location>
</feature>
<feature type="sequence variant" id="VAR_088640" description="In HJS2; likely pathogenic; disrupts interaction with PPP2R5D and PPP2CA." evidence="24">
    <original>R</original>
    <variation>L</variation>
    <location>
        <position position="498"/>
    </location>
</feature>
<feature type="sequence conflict" description="In Ref. 1; AAA35531." evidence="29" ref="1">
    <original>P</original>
    <variation>A</variation>
    <location>
        <position position="130"/>
    </location>
</feature>
<feature type="sequence conflict" description="In Ref. 2; AAA36399." evidence="29" ref="2">
    <original>R</original>
    <variation>A</variation>
    <location>
        <position position="258"/>
    </location>
</feature>
<feature type="sequence conflict" description="In Ref. 6; AA sequence." evidence="29" ref="6">
    <original>K</original>
    <variation>R</variation>
    <location>
        <position position="272"/>
    </location>
</feature>
<feature type="sequence conflict" description="In Ref. 3; CAG29336." evidence="29" ref="3">
    <original>L</original>
    <variation>P</variation>
    <location>
        <position position="551"/>
    </location>
</feature>
<feature type="turn" evidence="47">
    <location>
        <begin position="6"/>
        <end position="8"/>
    </location>
</feature>
<feature type="helix" evidence="47">
    <location>
        <begin position="11"/>
        <end position="19"/>
    </location>
</feature>
<feature type="strand" evidence="51">
    <location>
        <begin position="21"/>
        <end position="23"/>
    </location>
</feature>
<feature type="helix" evidence="47">
    <location>
        <begin position="25"/>
        <end position="33"/>
    </location>
</feature>
<feature type="helix" evidence="47">
    <location>
        <begin position="35"/>
        <end position="41"/>
    </location>
</feature>
<feature type="helix" evidence="47">
    <location>
        <begin position="44"/>
        <end position="49"/>
    </location>
</feature>
<feature type="helix" evidence="47">
    <location>
        <begin position="51"/>
        <end position="57"/>
    </location>
</feature>
<feature type="helix" evidence="47">
    <location>
        <begin position="63"/>
        <end position="73"/>
    </location>
</feature>
<feature type="turn" evidence="50">
    <location>
        <begin position="74"/>
        <end position="77"/>
    </location>
</feature>
<feature type="helix" evidence="47">
    <location>
        <begin position="78"/>
        <end position="80"/>
    </location>
</feature>
<feature type="helix" evidence="47">
    <location>
        <begin position="83"/>
        <end position="89"/>
    </location>
</feature>
<feature type="helix" evidence="47">
    <location>
        <begin position="90"/>
        <end position="96"/>
    </location>
</feature>
<feature type="strand" evidence="48">
    <location>
        <begin position="99"/>
        <end position="101"/>
    </location>
</feature>
<feature type="helix" evidence="47">
    <location>
        <begin position="102"/>
        <end position="116"/>
    </location>
</feature>
<feature type="strand" evidence="51">
    <location>
        <begin position="117"/>
        <end position="119"/>
    </location>
</feature>
<feature type="helix" evidence="47">
    <location>
        <begin position="121"/>
        <end position="126"/>
    </location>
</feature>
<feature type="helix" evidence="47">
    <location>
        <begin position="128"/>
        <end position="136"/>
    </location>
</feature>
<feature type="strand" evidence="49">
    <location>
        <begin position="138"/>
        <end position="140"/>
    </location>
</feature>
<feature type="helix" evidence="47">
    <location>
        <begin position="141"/>
        <end position="147"/>
    </location>
</feature>
<feature type="helix" evidence="47">
    <location>
        <begin position="148"/>
        <end position="150"/>
    </location>
</feature>
<feature type="helix" evidence="47">
    <location>
        <begin position="151"/>
        <end position="154"/>
    </location>
</feature>
<feature type="turn" evidence="47">
    <location>
        <begin position="155"/>
        <end position="157"/>
    </location>
</feature>
<feature type="helix" evidence="47">
    <location>
        <begin position="160"/>
        <end position="174"/>
    </location>
</feature>
<feature type="strand" evidence="52">
    <location>
        <begin position="175"/>
        <end position="177"/>
    </location>
</feature>
<feature type="helix" evidence="47">
    <location>
        <begin position="179"/>
        <end position="194"/>
    </location>
</feature>
<feature type="helix" evidence="47">
    <location>
        <begin position="198"/>
        <end position="203"/>
    </location>
</feature>
<feature type="helix" evidence="47">
    <location>
        <begin position="205"/>
        <end position="213"/>
    </location>
</feature>
<feature type="helix" evidence="47">
    <location>
        <begin position="218"/>
        <end position="221"/>
    </location>
</feature>
<feature type="helix" evidence="47">
    <location>
        <begin position="224"/>
        <end position="234"/>
    </location>
</feature>
<feature type="helix" evidence="47">
    <location>
        <begin position="237"/>
        <end position="239"/>
    </location>
</feature>
<feature type="helix" evidence="47">
    <location>
        <begin position="240"/>
        <end position="243"/>
    </location>
</feature>
<feature type="helix" evidence="47">
    <location>
        <begin position="245"/>
        <end position="252"/>
    </location>
</feature>
<feature type="helix" evidence="47">
    <location>
        <begin position="257"/>
        <end position="265"/>
    </location>
</feature>
<feature type="helix" evidence="47">
    <location>
        <begin position="267"/>
        <end position="274"/>
    </location>
</feature>
<feature type="helix" evidence="47">
    <location>
        <begin position="276"/>
        <end position="281"/>
    </location>
</feature>
<feature type="helix" evidence="47">
    <location>
        <begin position="283"/>
        <end position="291"/>
    </location>
</feature>
<feature type="strand" evidence="51">
    <location>
        <begin position="292"/>
        <end position="294"/>
    </location>
</feature>
<feature type="helix" evidence="47">
    <location>
        <begin position="296"/>
        <end position="311"/>
    </location>
</feature>
<feature type="turn" evidence="47">
    <location>
        <begin position="315"/>
        <end position="317"/>
    </location>
</feature>
<feature type="helix" evidence="47">
    <location>
        <begin position="318"/>
        <end position="324"/>
    </location>
</feature>
<feature type="helix" evidence="47">
    <location>
        <begin position="326"/>
        <end position="334"/>
    </location>
</feature>
<feature type="helix" evidence="47">
    <location>
        <begin position="339"/>
        <end position="346"/>
    </location>
</feature>
<feature type="helix" evidence="47">
    <location>
        <begin position="349"/>
        <end position="352"/>
    </location>
</feature>
<feature type="helix" evidence="47">
    <location>
        <begin position="353"/>
        <end position="356"/>
    </location>
</feature>
<feature type="helix" evidence="47">
    <location>
        <begin position="358"/>
        <end position="364"/>
    </location>
</feature>
<feature type="helix" evidence="47">
    <location>
        <begin position="366"/>
        <end position="373"/>
    </location>
</feature>
<feature type="helix" evidence="47">
    <location>
        <begin position="378"/>
        <end position="385"/>
    </location>
</feature>
<feature type="helix" evidence="47">
    <location>
        <begin position="389"/>
        <end position="394"/>
    </location>
</feature>
<feature type="helix" evidence="47">
    <location>
        <begin position="397"/>
        <end position="412"/>
    </location>
</feature>
<feature type="strand" evidence="51">
    <location>
        <begin position="413"/>
        <end position="415"/>
    </location>
</feature>
<feature type="helix" evidence="47">
    <location>
        <begin position="417"/>
        <end position="434"/>
    </location>
</feature>
<feature type="helix" evidence="47">
    <location>
        <begin position="436"/>
        <end position="438"/>
    </location>
</feature>
<feature type="helix" evidence="47">
    <location>
        <begin position="441"/>
        <end position="449"/>
    </location>
</feature>
<feature type="helix" evidence="47">
    <location>
        <begin position="450"/>
        <end position="452"/>
    </location>
</feature>
<feature type="helix" evidence="47">
    <location>
        <begin position="456"/>
        <end position="473"/>
    </location>
</feature>
<feature type="helix" evidence="47">
    <location>
        <begin position="475"/>
        <end position="481"/>
    </location>
</feature>
<feature type="helix" evidence="47">
    <location>
        <begin position="483"/>
        <end position="488"/>
    </location>
</feature>
<feature type="turn" evidence="47">
    <location>
        <begin position="489"/>
        <end position="491"/>
    </location>
</feature>
<feature type="strand" evidence="52">
    <location>
        <begin position="492"/>
        <end position="494"/>
    </location>
</feature>
<feature type="helix" evidence="47">
    <location>
        <begin position="495"/>
        <end position="520"/>
    </location>
</feature>
<feature type="helix" evidence="47">
    <location>
        <begin position="522"/>
        <end position="527"/>
    </location>
</feature>
<feature type="helix" evidence="47">
    <location>
        <begin position="528"/>
        <end position="530"/>
    </location>
</feature>
<feature type="helix" evidence="47">
    <location>
        <begin position="534"/>
        <end position="547"/>
    </location>
</feature>
<feature type="helix" evidence="47">
    <location>
        <begin position="548"/>
        <end position="550"/>
    </location>
</feature>
<feature type="helix" evidence="47">
    <location>
        <begin position="553"/>
        <end position="567"/>
    </location>
</feature>
<feature type="strand" evidence="53">
    <location>
        <begin position="569"/>
        <end position="571"/>
    </location>
</feature>
<feature type="helix" evidence="47">
    <location>
        <begin position="573"/>
        <end position="585"/>
    </location>
</feature>
<dbReference type="EMBL" id="M31786">
    <property type="protein sequence ID" value="AAA35531.1"/>
    <property type="molecule type" value="mRNA"/>
</dbReference>
<dbReference type="EMBL" id="J02902">
    <property type="protein sequence ID" value="AAA36399.1"/>
    <property type="molecule type" value="mRNA"/>
</dbReference>
<dbReference type="EMBL" id="CR450340">
    <property type="protein sequence ID" value="CAG29336.1"/>
    <property type="molecule type" value="mRNA"/>
</dbReference>
<dbReference type="EMBL" id="BC001537">
    <property type="protein sequence ID" value="AAH01537.1"/>
    <property type="molecule type" value="mRNA"/>
</dbReference>
<dbReference type="CCDS" id="CCDS12849.1"/>
<dbReference type="PIR" id="A34541">
    <property type="entry name" value="A34541"/>
</dbReference>
<dbReference type="RefSeq" id="NP_055040.2">
    <property type="nucleotide sequence ID" value="NM_014225.5"/>
</dbReference>
<dbReference type="PDB" id="1B3U">
    <property type="method" value="X-ray"/>
    <property type="resolution" value="2.30 A"/>
    <property type="chains" value="A/B=2-589"/>
</dbReference>
<dbReference type="PDB" id="2IE3">
    <property type="method" value="X-ray"/>
    <property type="resolution" value="2.80 A"/>
    <property type="chains" value="A=1-589"/>
</dbReference>
<dbReference type="PDB" id="2IE4">
    <property type="method" value="X-ray"/>
    <property type="resolution" value="2.60 A"/>
    <property type="chains" value="A=1-589"/>
</dbReference>
<dbReference type="PDB" id="2NPP">
    <property type="method" value="X-ray"/>
    <property type="resolution" value="3.30 A"/>
    <property type="chains" value="A/D=1-589"/>
</dbReference>
<dbReference type="PDB" id="2NYL">
    <property type="method" value="X-ray"/>
    <property type="resolution" value="3.80 A"/>
    <property type="chains" value="A/D=8-589"/>
</dbReference>
<dbReference type="PDB" id="2NYM">
    <property type="method" value="X-ray"/>
    <property type="resolution" value="3.60 A"/>
    <property type="chains" value="A/D=8-589"/>
</dbReference>
<dbReference type="PDB" id="2PKG">
    <property type="method" value="X-ray"/>
    <property type="resolution" value="3.30 A"/>
    <property type="chains" value="A/B=10-589"/>
</dbReference>
<dbReference type="PDB" id="3C5W">
    <property type="method" value="X-ray"/>
    <property type="resolution" value="2.80 A"/>
    <property type="chains" value="A=9-46, A=400-589"/>
</dbReference>
<dbReference type="PDB" id="3DW8">
    <property type="method" value="X-ray"/>
    <property type="resolution" value="2.85 A"/>
    <property type="chains" value="A/D=9-589"/>
</dbReference>
<dbReference type="PDB" id="3K7V">
    <property type="method" value="X-ray"/>
    <property type="resolution" value="2.85 A"/>
    <property type="chains" value="A=1-589"/>
</dbReference>
<dbReference type="PDB" id="3K7W">
    <property type="method" value="X-ray"/>
    <property type="resolution" value="2.96 A"/>
    <property type="chains" value="A=1-589"/>
</dbReference>
<dbReference type="PDB" id="4I5L">
    <property type="method" value="X-ray"/>
    <property type="resolution" value="2.43 A"/>
    <property type="chains" value="A/D=6-589"/>
</dbReference>
<dbReference type="PDB" id="4I5N">
    <property type="method" value="X-ray"/>
    <property type="resolution" value="2.80 A"/>
    <property type="chains" value="A/D=6-589"/>
</dbReference>
<dbReference type="PDB" id="4LAC">
    <property type="method" value="X-ray"/>
    <property type="resolution" value="2.82 A"/>
    <property type="chains" value="A=404-589"/>
</dbReference>
<dbReference type="PDB" id="5W0W">
    <property type="method" value="X-ray"/>
    <property type="resolution" value="3.80 A"/>
    <property type="chains" value="A/D/G/J=9-589"/>
</dbReference>
<dbReference type="PDB" id="6IUR">
    <property type="method" value="X-ray"/>
    <property type="resolution" value="3.33 A"/>
    <property type="chains" value="A/B/E/F=8-589"/>
</dbReference>
<dbReference type="PDB" id="6NTS">
    <property type="method" value="EM"/>
    <property type="resolution" value="3.63 A"/>
    <property type="chains" value="A=1-589"/>
</dbReference>
<dbReference type="PDB" id="7CUN">
    <property type="method" value="EM"/>
    <property type="resolution" value="3.50 A"/>
    <property type="chains" value="P=1-589"/>
</dbReference>
<dbReference type="PDB" id="7K36">
    <property type="method" value="EM"/>
    <property type="resolution" value="3.30 A"/>
    <property type="chains" value="A=1-589"/>
</dbReference>
<dbReference type="PDB" id="7PKS">
    <property type="method" value="EM"/>
    <property type="resolution" value="3.60 A"/>
    <property type="chains" value="p=1-589"/>
</dbReference>
<dbReference type="PDB" id="7SOY">
    <property type="method" value="EM"/>
    <property type="resolution" value="3.40 A"/>
    <property type="chains" value="A=1-589"/>
</dbReference>
<dbReference type="PDB" id="7YCX">
    <property type="method" value="EM"/>
    <property type="resolution" value="4.18 A"/>
    <property type="chains" value="P=1-589"/>
</dbReference>
<dbReference type="PDB" id="8RBX">
    <property type="method" value="EM"/>
    <property type="resolution" value="4.10 A"/>
    <property type="chains" value="p=1-589"/>
</dbReference>
<dbReference type="PDB" id="8RBZ">
    <property type="method" value="EM"/>
    <property type="resolution" value="3.70 A"/>
    <property type="chains" value="p=1-589"/>
</dbReference>
<dbReference type="PDB" id="8RC4">
    <property type="method" value="EM"/>
    <property type="resolution" value="3.10 A"/>
    <property type="chains" value="p=1-589"/>
</dbReference>
<dbReference type="PDB" id="8SO0">
    <property type="method" value="EM"/>
    <property type="resolution" value="2.80 A"/>
    <property type="chains" value="A=9-589"/>
</dbReference>
<dbReference type="PDB" id="8TTB">
    <property type="method" value="EM"/>
    <property type="resolution" value="2.77 A"/>
    <property type="chains" value="A=9-589"/>
</dbReference>
<dbReference type="PDB" id="8TWE">
    <property type="method" value="EM"/>
    <property type="resolution" value="2.55 A"/>
    <property type="chains" value="A=9-589"/>
</dbReference>
<dbReference type="PDB" id="8TWI">
    <property type="method" value="EM"/>
    <property type="resolution" value="2.69 A"/>
    <property type="chains" value="A=9-589"/>
</dbReference>
<dbReference type="PDB" id="8U1X">
    <property type="method" value="EM"/>
    <property type="resolution" value="2.70 A"/>
    <property type="chains" value="A=1-589"/>
</dbReference>
<dbReference type="PDB" id="8U89">
    <property type="method" value="EM"/>
    <property type="resolution" value="3.30 A"/>
    <property type="chains" value="A=1-589"/>
</dbReference>
<dbReference type="PDB" id="8UWB">
    <property type="method" value="X-ray"/>
    <property type="resolution" value="3.15 A"/>
    <property type="chains" value="C/F=439-505"/>
</dbReference>
<dbReference type="PDB" id="8YJB">
    <property type="method" value="EM"/>
    <property type="resolution" value="4.10 A"/>
    <property type="chains" value="P=1-589"/>
</dbReference>
<dbReference type="PDBsum" id="1B3U"/>
<dbReference type="PDBsum" id="2IE3"/>
<dbReference type="PDBsum" id="2IE4"/>
<dbReference type="PDBsum" id="2NPP"/>
<dbReference type="PDBsum" id="2NYL"/>
<dbReference type="PDBsum" id="2NYM"/>
<dbReference type="PDBsum" id="2PKG"/>
<dbReference type="PDBsum" id="3C5W"/>
<dbReference type="PDBsum" id="3DW8"/>
<dbReference type="PDBsum" id="3K7V"/>
<dbReference type="PDBsum" id="3K7W"/>
<dbReference type="PDBsum" id="4I5L"/>
<dbReference type="PDBsum" id="4I5N"/>
<dbReference type="PDBsum" id="4LAC"/>
<dbReference type="PDBsum" id="5W0W"/>
<dbReference type="PDBsum" id="6IUR"/>
<dbReference type="PDBsum" id="6NTS"/>
<dbReference type="PDBsum" id="7CUN"/>
<dbReference type="PDBsum" id="7K36"/>
<dbReference type="PDBsum" id="7PKS"/>
<dbReference type="PDBsum" id="7SOY"/>
<dbReference type="PDBsum" id="7YCX"/>
<dbReference type="PDBsum" id="8RBX"/>
<dbReference type="PDBsum" id="8RBZ"/>
<dbReference type="PDBsum" id="8RC4"/>
<dbReference type="PDBsum" id="8SO0"/>
<dbReference type="PDBsum" id="8TTB"/>
<dbReference type="PDBsum" id="8TWE"/>
<dbReference type="PDBsum" id="8TWI"/>
<dbReference type="PDBsum" id="8U1X"/>
<dbReference type="PDBsum" id="8U89"/>
<dbReference type="PDBsum" id="8UWB"/>
<dbReference type="PDBsum" id="8YJB"/>
<dbReference type="EMDB" id="EMD-0510"/>
<dbReference type="EMDB" id="EMD-13479"/>
<dbReference type="EMDB" id="EMD-19038"/>
<dbReference type="EMDB" id="EMD-19040"/>
<dbReference type="EMDB" id="EMD-19047"/>
<dbReference type="EMDB" id="EMD-22650"/>
<dbReference type="EMDB" id="EMD-25363"/>
<dbReference type="EMDB" id="EMD-30473"/>
<dbReference type="EMDB" id="EMD-33741"/>
<dbReference type="EMDB" id="EMD-39338"/>
<dbReference type="EMDB" id="EMD-40644"/>
<dbReference type="EMDB" id="EMD-41604"/>
<dbReference type="EMDB" id="EMD-41667"/>
<dbReference type="EMDB" id="EMD-41668"/>
<dbReference type="EMDB" id="EMD-41837"/>
<dbReference type="EMDB" id="EMD-42018"/>
<dbReference type="SASBDB" id="P30153"/>
<dbReference type="SMR" id="P30153"/>
<dbReference type="BioGRID" id="111510">
    <property type="interactions" value="681"/>
</dbReference>
<dbReference type="ComplexPortal" id="CPX-2236">
    <property type="entry name" value="STRIPAK complex, STRIP1-STRN3 variant"/>
</dbReference>
<dbReference type="ComplexPortal" id="CPX-8601">
    <property type="entry name" value="STRIPAK complex, STRIP2-STRN3 variant"/>
</dbReference>
<dbReference type="ComplexPortal" id="CPX-8604">
    <property type="entry name" value="STRIPAK complex, STRIP1-STRN variant"/>
</dbReference>
<dbReference type="ComplexPortal" id="CPX-8605">
    <property type="entry name" value="STRIPAK complex, STRIP2-STRN variant"/>
</dbReference>
<dbReference type="ComplexPortal" id="CPX-8606">
    <property type="entry name" value="STRIPAK complex, STRIP1-STRN4 variant"/>
</dbReference>
<dbReference type="ComplexPortal" id="CPX-8607">
    <property type="entry name" value="STRIPAK complex, STRIP2-STRN4 variant"/>
</dbReference>
<dbReference type="CORUM" id="P30153"/>
<dbReference type="DIP" id="DIP-29394N"/>
<dbReference type="FunCoup" id="P30153">
    <property type="interactions" value="2659"/>
</dbReference>
<dbReference type="IntAct" id="P30153">
    <property type="interactions" value="316"/>
</dbReference>
<dbReference type="MINT" id="P30153"/>
<dbReference type="STRING" id="9606.ENSP00000324804"/>
<dbReference type="DrugBank" id="DB06905">
    <property type="generic name" value="(2S,3S,4E,6E,8S,9S)-3-amino-9-methoxy-2,6,8-trimethyl-10-phenyldeca-4,6-dienoic acid"/>
</dbReference>
<dbReference type="DrugBank" id="DB02506">
    <property type="generic name" value="2,6,8-Trimethyl-3-Amino-9-Benzyl-9-Methoxynonanoic Acid"/>
</dbReference>
<dbReference type="GlyCosmos" id="P30153">
    <property type="glycosylation" value="1 site, 1 glycan"/>
</dbReference>
<dbReference type="GlyGen" id="P30153">
    <property type="glycosylation" value="2 sites, 1 N-linked glycan (1 site), 1 O-linked glycan (1 site)"/>
</dbReference>
<dbReference type="iPTMnet" id="P30153"/>
<dbReference type="MetOSite" id="P30153"/>
<dbReference type="PhosphoSitePlus" id="P30153"/>
<dbReference type="SwissPalm" id="P30153"/>
<dbReference type="BioMuta" id="PPP2R1A"/>
<dbReference type="DMDM" id="143811355"/>
<dbReference type="OGP" id="P30153"/>
<dbReference type="REPRODUCTION-2DPAGE" id="IPI00554737"/>
<dbReference type="CPTAC" id="CPTAC-257"/>
<dbReference type="CPTAC" id="CPTAC-258"/>
<dbReference type="jPOST" id="P30153"/>
<dbReference type="MassIVE" id="P30153"/>
<dbReference type="PaxDb" id="9606-ENSP00000324804"/>
<dbReference type="PeptideAtlas" id="P30153"/>
<dbReference type="ProteomicsDB" id="54636"/>
<dbReference type="Pumba" id="P30153"/>
<dbReference type="Antibodypedia" id="4348">
    <property type="antibodies" value="390 antibodies from 42 providers"/>
</dbReference>
<dbReference type="DNASU" id="5518"/>
<dbReference type="Ensembl" id="ENST00000322088.11">
    <property type="protein sequence ID" value="ENSP00000324804.6"/>
    <property type="gene ID" value="ENSG00000105568.19"/>
</dbReference>
<dbReference type="GeneID" id="5518"/>
<dbReference type="KEGG" id="hsa:5518"/>
<dbReference type="MANE-Select" id="ENST00000322088.11">
    <property type="protein sequence ID" value="ENSP00000324804.6"/>
    <property type="RefSeq nucleotide sequence ID" value="NM_014225.6"/>
    <property type="RefSeq protein sequence ID" value="NP_055040.2"/>
</dbReference>
<dbReference type="UCSC" id="uc002pyp.4">
    <property type="organism name" value="human"/>
</dbReference>
<dbReference type="AGR" id="HGNC:9302"/>
<dbReference type="CTD" id="5518"/>
<dbReference type="DisGeNET" id="5518"/>
<dbReference type="GeneCards" id="PPP2R1A"/>
<dbReference type="GeneReviews" id="PPP2R1A"/>
<dbReference type="HGNC" id="HGNC:9302">
    <property type="gene designation" value="PPP2R1A"/>
</dbReference>
<dbReference type="HPA" id="ENSG00000105568">
    <property type="expression patterns" value="Low tissue specificity"/>
</dbReference>
<dbReference type="MalaCards" id="PPP2R1A"/>
<dbReference type="MIM" id="605983">
    <property type="type" value="gene"/>
</dbReference>
<dbReference type="MIM" id="616362">
    <property type="type" value="phenotype"/>
</dbReference>
<dbReference type="neXtProt" id="NX_P30153"/>
<dbReference type="OpenTargets" id="ENSG00000105568"/>
<dbReference type="Orphanet" id="457284">
    <property type="disease" value="Microcephaly-corpus callosum hypoplasia-intellectual disability-facial dysmorphism syndrome"/>
</dbReference>
<dbReference type="PharmGKB" id="PA33666"/>
<dbReference type="VEuPathDB" id="HostDB:ENSG00000105568"/>
<dbReference type="eggNOG" id="KOG0211">
    <property type="taxonomic scope" value="Eukaryota"/>
</dbReference>
<dbReference type="GeneTree" id="ENSGT00950000183066"/>
<dbReference type="HOGENOM" id="CLU_015533_2_1_1"/>
<dbReference type="InParanoid" id="P30153"/>
<dbReference type="OMA" id="NTLCMTW"/>
<dbReference type="OrthoDB" id="340346at2759"/>
<dbReference type="PAN-GO" id="P30153">
    <property type="GO annotations" value="5 GO annotations based on evolutionary models"/>
</dbReference>
<dbReference type="PhylomeDB" id="P30153"/>
<dbReference type="TreeFam" id="TF105552"/>
<dbReference type="BioCyc" id="MetaCyc:ENSG00000105568-MONOMER"/>
<dbReference type="PathwayCommons" id="P30153"/>
<dbReference type="Reactome" id="R-HSA-113501">
    <property type="pathway name" value="Inhibition of replication initiation of damaged DNA by RB1/E2F1"/>
</dbReference>
<dbReference type="Reactome" id="R-HSA-1295596">
    <property type="pathway name" value="Spry regulation of FGF signaling"/>
</dbReference>
<dbReference type="Reactome" id="R-HSA-141444">
    <property type="pathway name" value="Amplification of signal from unattached kinetochores via a MAD2 inhibitory signal"/>
</dbReference>
<dbReference type="Reactome" id="R-HSA-163685">
    <property type="pathway name" value="Integration of energy metabolism"/>
</dbReference>
<dbReference type="Reactome" id="R-HSA-163767">
    <property type="pathway name" value="PP2A-mediated dephosphorylation of key metabolic factors"/>
</dbReference>
<dbReference type="Reactome" id="R-HSA-180024">
    <property type="pathway name" value="DARPP-32 events"/>
</dbReference>
<dbReference type="Reactome" id="R-HSA-195253">
    <property type="pathway name" value="Degradation of beta-catenin by the destruction complex"/>
</dbReference>
<dbReference type="Reactome" id="R-HSA-196299">
    <property type="pathway name" value="Beta-catenin phosphorylation cascade"/>
</dbReference>
<dbReference type="Reactome" id="R-HSA-198753">
    <property type="pathway name" value="ERK/MAPK targets"/>
</dbReference>
<dbReference type="Reactome" id="R-HSA-202670">
    <property type="pathway name" value="ERKs are inactivated"/>
</dbReference>
<dbReference type="Reactome" id="R-HSA-2465910">
    <property type="pathway name" value="MASTL Facilitates Mitotic Progression"/>
</dbReference>
<dbReference type="Reactome" id="R-HSA-2467813">
    <property type="pathway name" value="Separation of Sister Chromatids"/>
</dbReference>
<dbReference type="Reactome" id="R-HSA-2500257">
    <property type="pathway name" value="Resolution of Sister Chromatid Cohesion"/>
</dbReference>
<dbReference type="Reactome" id="R-HSA-2565942">
    <property type="pathway name" value="Regulation of PLK1 Activity at G2/M Transition"/>
</dbReference>
<dbReference type="Reactome" id="R-HSA-2995383">
    <property type="pathway name" value="Initiation of Nuclear Envelope (NE) Reformation"/>
</dbReference>
<dbReference type="Reactome" id="R-HSA-380259">
    <property type="pathway name" value="Loss of Nlp from mitotic centrosomes"/>
</dbReference>
<dbReference type="Reactome" id="R-HSA-380270">
    <property type="pathway name" value="Recruitment of mitotic centrosome proteins and complexes"/>
</dbReference>
<dbReference type="Reactome" id="R-HSA-380284">
    <property type="pathway name" value="Loss of proteins required for interphase microtubule organization from the centrosome"/>
</dbReference>
<dbReference type="Reactome" id="R-HSA-380320">
    <property type="pathway name" value="Recruitment of NuMA to mitotic centrosomes"/>
</dbReference>
<dbReference type="Reactome" id="R-HSA-389356">
    <property type="pathway name" value="Co-stimulation by CD28"/>
</dbReference>
<dbReference type="Reactome" id="R-HSA-389513">
    <property type="pathway name" value="Co-inhibition by CTLA4"/>
</dbReference>
<dbReference type="Reactome" id="R-HSA-432142">
    <property type="pathway name" value="Platelet sensitization by LDL"/>
</dbReference>
<dbReference type="Reactome" id="R-HSA-4641262">
    <property type="pathway name" value="Disassembly of the destruction complex and recruitment of AXIN to the membrane"/>
</dbReference>
<dbReference type="Reactome" id="R-HSA-5339716">
    <property type="pathway name" value="Signaling by GSK3beta mutants"/>
</dbReference>
<dbReference type="Reactome" id="R-HSA-5358747">
    <property type="pathway name" value="CTNNB1 S33 mutants aren't phosphorylated"/>
</dbReference>
<dbReference type="Reactome" id="R-HSA-5358749">
    <property type="pathway name" value="CTNNB1 S37 mutants aren't phosphorylated"/>
</dbReference>
<dbReference type="Reactome" id="R-HSA-5358751">
    <property type="pathway name" value="CTNNB1 S45 mutants aren't phosphorylated"/>
</dbReference>
<dbReference type="Reactome" id="R-HSA-5358752">
    <property type="pathway name" value="CTNNB1 T41 mutants aren't phosphorylated"/>
</dbReference>
<dbReference type="Reactome" id="R-HSA-5467337">
    <property type="pathway name" value="APC truncation mutants have impaired AXIN binding"/>
</dbReference>
<dbReference type="Reactome" id="R-HSA-5467340">
    <property type="pathway name" value="AXIN missense mutants destabilize the destruction complex"/>
</dbReference>
<dbReference type="Reactome" id="R-HSA-5467348">
    <property type="pathway name" value="Truncations of AMER1 destabilize the destruction complex"/>
</dbReference>
<dbReference type="Reactome" id="R-HSA-5620912">
    <property type="pathway name" value="Anchoring of the basal body to the plasma membrane"/>
</dbReference>
<dbReference type="Reactome" id="R-HSA-5663220">
    <property type="pathway name" value="RHO GTPases Activate Formins"/>
</dbReference>
<dbReference type="Reactome" id="R-HSA-5673000">
    <property type="pathway name" value="RAF activation"/>
</dbReference>
<dbReference type="Reactome" id="R-HSA-5675221">
    <property type="pathway name" value="Negative regulation of MAPK pathway"/>
</dbReference>
<dbReference type="Reactome" id="R-HSA-6804757">
    <property type="pathway name" value="Regulation of TP53 Degradation"/>
</dbReference>
<dbReference type="Reactome" id="R-HSA-6811558">
    <property type="pathway name" value="PI5P, PP2A and IER3 Regulate PI3K/AKT Signaling"/>
</dbReference>
<dbReference type="Reactome" id="R-HSA-68877">
    <property type="pathway name" value="Mitotic Prometaphase"/>
</dbReference>
<dbReference type="Reactome" id="R-HSA-69231">
    <property type="pathway name" value="Cyclin D associated events in G1"/>
</dbReference>
<dbReference type="Reactome" id="R-HSA-69273">
    <property type="pathway name" value="Cyclin A/B1/B2 associated events during G2/M transition"/>
</dbReference>
<dbReference type="Reactome" id="R-HSA-8854518">
    <property type="pathway name" value="AURKA Activation by TPX2"/>
</dbReference>
<dbReference type="Reactome" id="R-HSA-9634600">
    <property type="pathway name" value="Regulation of glycolysis by fructose 2,6-bisphosphate metabolism"/>
</dbReference>
<dbReference type="Reactome" id="R-HSA-9648025">
    <property type="pathway name" value="EML4 and NUDC in mitotic spindle formation"/>
</dbReference>
<dbReference type="Reactome" id="R-HSA-975957">
    <property type="pathway name" value="Nonsense Mediated Decay (NMD) enhanced by the Exon Junction Complex (EJC)"/>
</dbReference>
<dbReference type="Reactome" id="R-HSA-9833482">
    <property type="pathway name" value="PKR-mediated signaling"/>
</dbReference>
<dbReference type="Reactome" id="R-HSA-9860927">
    <property type="pathway name" value="Turbulent (oscillatory, disturbed) flow shear stress activates signaling by PIEZO1 and integrins in endothelial cells"/>
</dbReference>
<dbReference type="SignaLink" id="P30153"/>
<dbReference type="SIGNOR" id="P30153"/>
<dbReference type="BioGRID-ORCS" id="5518">
    <property type="hits" value="712 hits in 1185 CRISPR screens"/>
</dbReference>
<dbReference type="CD-CODE" id="DEE660B4">
    <property type="entry name" value="Stress granule"/>
</dbReference>
<dbReference type="CD-CODE" id="FB4E32DD">
    <property type="entry name" value="Presynaptic clusters and postsynaptic densities"/>
</dbReference>
<dbReference type="ChiTaRS" id="PPP2R1A">
    <property type="organism name" value="human"/>
</dbReference>
<dbReference type="EvolutionaryTrace" id="P30153"/>
<dbReference type="GeneWiki" id="PPP2R1A"/>
<dbReference type="GenomeRNAi" id="5518"/>
<dbReference type="Pharos" id="P30153">
    <property type="development level" value="Tbio"/>
</dbReference>
<dbReference type="PRO" id="PR:P30153"/>
<dbReference type="Proteomes" id="UP000005640">
    <property type="component" value="Chromosome 19"/>
</dbReference>
<dbReference type="RNAct" id="P30153">
    <property type="molecule type" value="protein"/>
</dbReference>
<dbReference type="Bgee" id="ENSG00000105568">
    <property type="expression patterns" value="Expressed in cortical plate and 199 other cell types or tissues"/>
</dbReference>
<dbReference type="ExpressionAtlas" id="P30153">
    <property type="expression patterns" value="baseline and differential"/>
</dbReference>
<dbReference type="GO" id="GO:0000785">
    <property type="term" value="C:chromatin"/>
    <property type="evidence" value="ECO:0000314"/>
    <property type="project" value="UniProtKB"/>
</dbReference>
<dbReference type="GO" id="GO:0000775">
    <property type="term" value="C:chromosome, centromeric region"/>
    <property type="evidence" value="ECO:0000314"/>
    <property type="project" value="UniProtKB"/>
</dbReference>
<dbReference type="GO" id="GO:0005737">
    <property type="term" value="C:cytoplasm"/>
    <property type="evidence" value="ECO:0000318"/>
    <property type="project" value="GO_Central"/>
</dbReference>
<dbReference type="GO" id="GO:0005829">
    <property type="term" value="C:cytosol"/>
    <property type="evidence" value="ECO:0000318"/>
    <property type="project" value="GO_Central"/>
</dbReference>
<dbReference type="GO" id="GO:0030425">
    <property type="term" value="C:dendrite"/>
    <property type="evidence" value="ECO:0007669"/>
    <property type="project" value="UniProtKB-SubCell"/>
</dbReference>
<dbReference type="GO" id="GO:0070062">
    <property type="term" value="C:extracellular exosome"/>
    <property type="evidence" value="ECO:0007005"/>
    <property type="project" value="UniProtKB"/>
</dbReference>
<dbReference type="GO" id="GO:0090443">
    <property type="term" value="C:FAR/SIN/STRIPAK complex"/>
    <property type="evidence" value="ECO:0000314"/>
    <property type="project" value="UniProtKB"/>
</dbReference>
<dbReference type="GO" id="GO:0098978">
    <property type="term" value="C:glutamatergic synapse"/>
    <property type="evidence" value="ECO:0007669"/>
    <property type="project" value="Ensembl"/>
</dbReference>
<dbReference type="GO" id="GO:0160232">
    <property type="term" value="C:INTAC complex"/>
    <property type="evidence" value="ECO:0000314"/>
    <property type="project" value="UniProtKB"/>
</dbReference>
<dbReference type="GO" id="GO:0016328">
    <property type="term" value="C:lateral plasma membrane"/>
    <property type="evidence" value="ECO:0000314"/>
    <property type="project" value="UniProtKB"/>
</dbReference>
<dbReference type="GO" id="GO:0016020">
    <property type="term" value="C:membrane"/>
    <property type="evidence" value="ECO:0000303"/>
    <property type="project" value="UniProtKB"/>
</dbReference>
<dbReference type="GO" id="GO:0015630">
    <property type="term" value="C:microtubule cytoskeleton"/>
    <property type="evidence" value="ECO:0000303"/>
    <property type="project" value="UniProtKB"/>
</dbReference>
<dbReference type="GO" id="GO:0005739">
    <property type="term" value="C:mitochondrion"/>
    <property type="evidence" value="ECO:0000303"/>
    <property type="project" value="UniProtKB"/>
</dbReference>
<dbReference type="GO" id="GO:0043005">
    <property type="term" value="C:neuron projection"/>
    <property type="evidence" value="ECO:0000314"/>
    <property type="project" value="UniProtKB"/>
</dbReference>
<dbReference type="GO" id="GO:0043025">
    <property type="term" value="C:neuronal cell body"/>
    <property type="evidence" value="ECO:0000314"/>
    <property type="project" value="UniProtKB"/>
</dbReference>
<dbReference type="GO" id="GO:0005634">
    <property type="term" value="C:nucleus"/>
    <property type="evidence" value="ECO:0000314"/>
    <property type="project" value="UniProtKB"/>
</dbReference>
<dbReference type="GO" id="GO:0000159">
    <property type="term" value="C:protein phosphatase type 2A complex"/>
    <property type="evidence" value="ECO:0000314"/>
    <property type="project" value="UniProtKB"/>
</dbReference>
<dbReference type="GO" id="GO:1990405">
    <property type="term" value="F:protein antigen binding"/>
    <property type="evidence" value="ECO:0000353"/>
    <property type="project" value="UniProtKB"/>
</dbReference>
<dbReference type="GO" id="GO:0046982">
    <property type="term" value="F:protein heterodimerization activity"/>
    <property type="evidence" value="ECO:0000353"/>
    <property type="project" value="UniProtKB"/>
</dbReference>
<dbReference type="GO" id="GO:0019888">
    <property type="term" value="F:protein phosphatase regulator activity"/>
    <property type="evidence" value="ECO:0000314"/>
    <property type="project" value="UniProtKB"/>
</dbReference>
<dbReference type="GO" id="GO:0004722">
    <property type="term" value="F:protein serine/threonine phosphatase activity"/>
    <property type="evidence" value="ECO:0007669"/>
    <property type="project" value="Ensembl"/>
</dbReference>
<dbReference type="GO" id="GO:0007059">
    <property type="term" value="P:chromosome segregation"/>
    <property type="evidence" value="ECO:0000314"/>
    <property type="project" value="UniProtKB"/>
</dbReference>
<dbReference type="GO" id="GO:0007143">
    <property type="term" value="P:female meiotic nuclear division"/>
    <property type="evidence" value="ECO:0007669"/>
    <property type="project" value="Ensembl"/>
</dbReference>
<dbReference type="GO" id="GO:0035556">
    <property type="term" value="P:intracellular signal transduction"/>
    <property type="evidence" value="ECO:0000303"/>
    <property type="project" value="UniProtKB"/>
</dbReference>
<dbReference type="GO" id="GO:0051754">
    <property type="term" value="P:meiotic sister chromatid cohesion, centromeric"/>
    <property type="evidence" value="ECO:0000318"/>
    <property type="project" value="GO_Central"/>
</dbReference>
<dbReference type="GO" id="GO:0051232">
    <property type="term" value="P:meiotic spindle elongation"/>
    <property type="evidence" value="ECO:0007669"/>
    <property type="project" value="Ensembl"/>
</dbReference>
<dbReference type="GO" id="GO:0051306">
    <property type="term" value="P:mitotic sister chromatid separation"/>
    <property type="evidence" value="ECO:0007669"/>
    <property type="project" value="Ensembl"/>
</dbReference>
<dbReference type="GO" id="GO:0035331">
    <property type="term" value="P:negative regulation of hippo signaling"/>
    <property type="evidence" value="ECO:0000314"/>
    <property type="project" value="UniProtKB"/>
</dbReference>
<dbReference type="GO" id="GO:0051898">
    <property type="term" value="P:negative regulation of phosphatidylinositol 3-kinase/protein kinase B signal transduction"/>
    <property type="evidence" value="ECO:0000250"/>
    <property type="project" value="UniProtKB"/>
</dbReference>
<dbReference type="GO" id="GO:2001241">
    <property type="term" value="P:positive regulation of extrinsic apoptotic signaling pathway in absence of ligand"/>
    <property type="evidence" value="ECO:0007669"/>
    <property type="project" value="Ensembl"/>
</dbReference>
<dbReference type="GO" id="GO:0065003">
    <property type="term" value="P:protein-containing complex assembly"/>
    <property type="evidence" value="ECO:0000304"/>
    <property type="project" value="UniProtKB"/>
</dbReference>
<dbReference type="GO" id="GO:0045595">
    <property type="term" value="P:regulation of cell differentiation"/>
    <property type="evidence" value="ECO:0000303"/>
    <property type="project" value="UniProtKB"/>
</dbReference>
<dbReference type="GO" id="GO:0040008">
    <property type="term" value="P:regulation of growth"/>
    <property type="evidence" value="ECO:0000303"/>
    <property type="project" value="UniProtKB"/>
</dbReference>
<dbReference type="GO" id="GO:1903538">
    <property type="term" value="P:regulation of meiotic cell cycle process involved in oocyte maturation"/>
    <property type="evidence" value="ECO:0007669"/>
    <property type="project" value="Ensembl"/>
</dbReference>
<dbReference type="GO" id="GO:0160240">
    <property type="term" value="P:RNA polymerase II transcription initiation surveillance"/>
    <property type="evidence" value="ECO:0000314"/>
    <property type="project" value="UniProtKB"/>
</dbReference>
<dbReference type="GO" id="GO:0051225">
    <property type="term" value="P:spindle assembly"/>
    <property type="evidence" value="ECO:0000318"/>
    <property type="project" value="GO_Central"/>
</dbReference>
<dbReference type="GO" id="GO:0043029">
    <property type="term" value="P:T cell homeostasis"/>
    <property type="evidence" value="ECO:0000250"/>
    <property type="project" value="UniProtKB"/>
</dbReference>
<dbReference type="FunFam" id="1.25.10.10:FF:000011">
    <property type="entry name" value="Serine/threonine-protein phosphatase 2A regulatory subunit A alpha isoform"/>
    <property type="match status" value="1"/>
</dbReference>
<dbReference type="Gene3D" id="1.25.10.10">
    <property type="entry name" value="Leucine-rich Repeat Variant"/>
    <property type="match status" value="1"/>
</dbReference>
<dbReference type="InterPro" id="IPR011989">
    <property type="entry name" value="ARM-like"/>
</dbReference>
<dbReference type="InterPro" id="IPR016024">
    <property type="entry name" value="ARM-type_fold"/>
</dbReference>
<dbReference type="InterPro" id="IPR000357">
    <property type="entry name" value="HEAT"/>
</dbReference>
<dbReference type="InterPro" id="IPR021133">
    <property type="entry name" value="HEAT_type_2"/>
</dbReference>
<dbReference type="InterPro" id="IPR054573">
    <property type="entry name" value="PP2A/SF3B1-like_HEAT"/>
</dbReference>
<dbReference type="InterPro" id="IPR051023">
    <property type="entry name" value="PP2A_Regulatory_Subunit_A"/>
</dbReference>
<dbReference type="PANTHER" id="PTHR10648">
    <property type="entry name" value="SERINE/THREONINE-PROTEIN PHOSPHATASE PP2A 65 KDA REGULATORY SUBUNIT"/>
    <property type="match status" value="1"/>
</dbReference>
<dbReference type="PANTHER" id="PTHR10648:SF2">
    <property type="entry name" value="SERINE_THREONINE-PROTEIN PHOSPHATASE 2A 65 KDA REGULATORY SUBUNIT A ALPHA ISOFORM"/>
    <property type="match status" value="1"/>
</dbReference>
<dbReference type="Pfam" id="PF02985">
    <property type="entry name" value="HEAT"/>
    <property type="match status" value="4"/>
</dbReference>
<dbReference type="Pfam" id="PF13646">
    <property type="entry name" value="HEAT_2"/>
    <property type="match status" value="1"/>
</dbReference>
<dbReference type="Pfam" id="PF22646">
    <property type="entry name" value="PPP2R1A-like_HEAT"/>
    <property type="match status" value="1"/>
</dbReference>
<dbReference type="SUPFAM" id="SSF48371">
    <property type="entry name" value="ARM repeat"/>
    <property type="match status" value="1"/>
</dbReference>
<dbReference type="PROSITE" id="PS50077">
    <property type="entry name" value="HEAT_REPEAT"/>
    <property type="match status" value="11"/>
</dbReference>
<comment type="function">
    <text evidence="2 4 5 11 17 19 20 21 27">The PR65 subunit of protein phosphatase 2A serves as a scaffolding molecule to coordinate the assembly of the catalytic subunit and a variable regulatory B subunit (PubMed:15525651, PubMed:16580887, PubMed:33243860, PubMed:33633399, PubMed:34004147, PubMed:8694763). Upon interaction with GNA12 promotes dephosphorylation of microtubule associated protein TAU/MAPT (PubMed:15525651). Required for proper chromosome segregation and for centromeric localization of SGO1 in mitosis (PubMed:16580887). Together with RACK1 adapter, mediates dephosphorylation of AKT1 at 'Ser-473', preventing AKT1 activation and AKT-mTOR signaling pathway (By similarity). Dephosphorylation of AKT1 is essential for regulatory T-cells (Treg) homeostasis and stability (By similarity). Part of the striatin-interacting phosphatase and kinase (STRIPAK) complexes (PubMed:18782753, PubMed:33633399). STRIPAK complexes have critical roles in protein (de)phosphorylation and are regulators of multiple signaling pathways including Hippo, MAPK, nuclear receptor and cytoskeleton remodeling (PubMed:18782753, PubMed:33633399). Different types of STRIPAK complexes are involved in a variety of biological processes such as cell growth, differentiation, apoptosis, metabolism and immune regulation (PubMed:18782753, PubMed:33633399). Key mediator of a quality checkpoint during transcription elongation as part of the Integrator-PP2A (INTAC) complex (PubMed:33243860, PubMed:34004147). The INTAC complex drives premature transcription termination of transcripts that are unfavorably configured for transcriptional elongation: within the INTAC complex, acts as a scaffolding subunit for PPP2CA, which catalyzes dephosphorylation of the C-terminal domain (CTD) of Pol II subunit POLR2A/RPB1 and SUPT5H/SPT5, thereby preventing transcriptional elongation (PubMed:33243860, PubMed:34004147). Regulates the recruitment of the SKA complex to kinetochores (PubMed:28982702).</text>
</comment>
<comment type="subunit">
    <text evidence="1 2 3 4 5 6 7 8 10 11 15 16 18 19 21 22 23 24 25 26">PP2A consists of a common heterodimeric core enzyme, composed of PPP2CA a 36 kDa catalytic subunit (subunit C) and PPP2R1A a 65 kDa constant regulatory subunit (PR65 or subunit A), that associates with a variety of regulatory subunits (PubMed:38123684). Proteins that associate with the core dimer include three families of regulatory subunits B (the R2/B/PR55/B55, R3/B''/PR72/PR130/PR59 and R5/B'/B56 families), the 48 kDa variable regulatory subunit, viral proteins, and cell signaling molecules (PubMed:38123684). Found in a complex with at least ARL2, PPP2CB, PPP2R1A, PPP2R2A, PPP2R5E and TBCD (By similarity). Interacts with the PP2A C catalytic subunit PPP2CA (PubMed:37761890, PubMed:38123684). Interacts with the PP2A B subunit PPP2R2A (PubMed:38123684). Interacts with the PP2A B subunit PPP2R5D (PubMed:37761890). Interacts with FOXO1; the interaction dephosphorylates FOXO1 on AKT-mediated phosphorylation sites (By similarity). Interacts with IPO9 (PubMed:12670497). Interacts with TP53 and SGO1 (PubMed:16580887, PubMed:17245430). Interacts with PLA2G16; this interaction might decrease PP2A activity (PubMed:17374643). Interacts with CTTNBP2NL (PubMed:18782753). Interacts with GNA12; the interaction promotes protein phosphatase 2A activation causing dephosphorylation of MAPT (PubMed:15525651). Interacts with CIP2A; this interaction stabilizes CIP2A (PubMed:28174209). Interacts with PABIR1/FAM122A (PubMed:27588481). Interacts with ADCY8; antagonizes interaction between ADCY8 and calmodulin (By similarity). Interacts with CRTC3 (when phosphorylated at 'Ser-391') (PubMed:30611118). Interacts with SPRY2 (PubMed:17974561). Part of the core of STRIPAK complexes composed of PP2A catalytic and scaffolding subunits, the striatins (PP2A regulatory subunits), the striatin-associated proteins MOB4, STRIP1 and STRIP2, PDCD10 and members of the STE20 kinases, such as STK24 and STK26 (PubMed:18782753). Component of the Integrator-PP2A (INTAC) complex, composed of the Integrator core complex and protein phosphatase 2A subunits PPP2CA and PPP2R1A (PubMed:34004147, PubMed:33243860, PubMed:34762484, PubMed:36869814, PubMed:38570683).</text>
</comment>
<comment type="subunit">
    <text evidence="9 12">(Microbial infection) Interacts with JC virus small t antigen; this interaction inhibits PPP2R1A activity.</text>
</comment>
<comment type="interaction">
    <interactant intactId="EBI-302388">
        <id>P30153</id>
    </interactant>
    <interactant intactId="EBI-296087">
        <id>P31749</id>
        <label>AKT1</label>
    </interactant>
    <organismsDiffer>false</organismsDiffer>
    <experiments>2</experiments>
</comment>
<comment type="interaction">
    <interactant intactId="EBI-302388">
        <id>P30153</id>
    </interactant>
    <interactant intactId="EBI-2512975">
        <id>Q9C0C7</id>
        <label>AMBRA1</label>
    </interactant>
    <organismsDiffer>false</organismsDiffer>
    <experiments>3</experiments>
</comment>
<comment type="interaction">
    <interactant intactId="EBI-302388">
        <id>P30153</id>
    </interactant>
    <interactant intactId="EBI-717515">
        <id>Q14155</id>
        <label>ARHGEF7</label>
    </interactant>
    <organismsDiffer>false</organismsDiffer>
    <experiments>3</experiments>
</comment>
<comment type="interaction">
    <interactant intactId="EBI-302388">
        <id>P30153</id>
    </interactant>
    <interactant intactId="EBI-624291">
        <id>Q96GD4</id>
        <label>AURKB</label>
    </interactant>
    <organismsDiffer>false</organismsDiffer>
    <experiments>3</experiments>
</comment>
<comment type="interaction">
    <interactant intactId="EBI-302388">
        <id>P30153</id>
    </interactant>
    <interactant intactId="EBI-718719">
        <id>Q9Y2V2</id>
        <label>CARHSP1</label>
    </interactant>
    <organismsDiffer>false</organismsDiffer>
    <experiments>3</experiments>
</comment>
<comment type="interaction">
    <interactant intactId="EBI-302388">
        <id>P30153</id>
    </interactant>
    <interactant intactId="EBI-3905829">
        <id>P51959</id>
        <label>CCNG1</label>
    </interactant>
    <organismsDiffer>false</organismsDiffer>
    <experiments>2</experiments>
</comment>
<comment type="interaction">
    <interactant intactId="EBI-302388">
        <id>P30153</id>
    </interactant>
    <interactant intactId="EBI-1379376">
        <id>Q8TCG1</id>
        <label>CIP2A</label>
    </interactant>
    <organismsDiffer>false</organismsDiffer>
    <experiments>4</experiments>
</comment>
<comment type="interaction">
    <interactant intactId="EBI-302388">
        <id>P30153</id>
    </interactant>
    <interactant intactId="EBI-1763657">
        <id>Q9Y534</id>
        <label>CSDC2</label>
    </interactant>
    <organismsDiffer>false</organismsDiffer>
    <experiments>6</experiments>
</comment>
<comment type="interaction">
    <interactant intactId="EBI-302388">
        <id>P30153</id>
    </interactant>
    <interactant intactId="EBI-12053217">
        <id>Q4G163</id>
        <label>FBXO43</label>
    </interactant>
    <organismsDiffer>false</organismsDiffer>
    <experiments>3</experiments>
</comment>
<comment type="interaction">
    <interactant intactId="EBI-302388">
        <id>P30153</id>
    </interactant>
    <interactant intactId="EBI-11163335">
        <id>Q9NYA3</id>
        <label>GOLGA6A</label>
    </interactant>
    <organismsDiffer>false</organismsDiffer>
    <experiments>3</experiments>
</comment>
<comment type="interaction">
    <interactant intactId="EBI-302388">
        <id>P30153</id>
    </interactant>
    <interactant intactId="EBI-10181260">
        <id>Q08AF8</id>
        <label>GOLGA8G</label>
    </interactant>
    <organismsDiffer>false</organismsDiffer>
    <experiments>3</experiments>
</comment>
<comment type="interaction">
    <interactant intactId="EBI-302388">
        <id>P30153</id>
    </interactant>
    <interactant intactId="EBI-746318">
        <id>P53816</id>
        <label>PLAAT3</label>
    </interactant>
    <organismsDiffer>false</organismsDiffer>
    <experiments>7</experiments>
</comment>
<comment type="interaction">
    <interactant intactId="EBI-302388">
        <id>P30153</id>
    </interactant>
    <interactant intactId="EBI-712311">
        <id>P67775</id>
        <label>PPP2CA</label>
    </interactant>
    <organismsDiffer>false</organismsDiffer>
    <experiments>50</experiments>
</comment>
<comment type="interaction">
    <interactant intactId="EBI-302388">
        <id>P30153</id>
    </interactant>
    <interactant intactId="EBI-16765970">
        <id>P67775-1</id>
        <label>PPP2CA</label>
    </interactant>
    <organismsDiffer>false</organismsDiffer>
    <experiments>5</experiments>
</comment>
<comment type="interaction">
    <interactant intactId="EBI-302388">
        <id>P30153</id>
    </interactant>
    <interactant intactId="EBI-357094">
        <id>P30154</id>
        <label>PPP2R1B</label>
    </interactant>
    <organismsDiffer>false</organismsDiffer>
    <experiments>3</experiments>
</comment>
<comment type="interaction">
    <interactant intactId="EBI-302388">
        <id>P30153</id>
    </interactant>
    <interactant intactId="EBI-1048931">
        <id>P63151</id>
        <label>PPP2R2A</label>
    </interactant>
    <organismsDiffer>false</organismsDiffer>
    <experiments>19</experiments>
</comment>
<comment type="interaction">
    <interactant intactId="EBI-302388">
        <id>P30153</id>
    </interactant>
    <interactant intactId="EBI-1052159">
        <id>Q00005</id>
        <label>PPP2R2B</label>
    </interactant>
    <organismsDiffer>false</organismsDiffer>
    <experiments>12</experiments>
</comment>
<comment type="interaction">
    <interactant intactId="EBI-302388">
        <id>P30153</id>
    </interactant>
    <interactant intactId="EBI-641666">
        <id>Q15172</id>
        <label>PPP2R5A</label>
    </interactant>
    <organismsDiffer>false</organismsDiffer>
    <experiments>8</experiments>
</comment>
<comment type="interaction">
    <interactant intactId="EBI-302388">
        <id>P30153</id>
    </interactant>
    <interactant intactId="EBI-1369497">
        <id>Q15173</id>
        <label>PPP2R5B</label>
    </interactant>
    <organismsDiffer>false</organismsDiffer>
    <experiments>6</experiments>
</comment>
<comment type="interaction">
    <interactant intactId="EBI-302388">
        <id>P30153</id>
    </interactant>
    <interactant intactId="EBI-1266156">
        <id>Q13362</id>
        <label>PPP2R5C</label>
    </interactant>
    <organismsDiffer>false</organismsDiffer>
    <experiments>12</experiments>
</comment>
<comment type="interaction">
    <interactant intactId="EBI-302388">
        <id>P30153</id>
    </interactant>
    <interactant intactId="EBI-1266170">
        <id>Q13362-1</id>
        <label>PPP2R5C</label>
    </interactant>
    <organismsDiffer>false</organismsDiffer>
    <experiments>5</experiments>
</comment>
<comment type="interaction">
    <interactant intactId="EBI-302388">
        <id>P30153</id>
    </interactant>
    <interactant intactId="EBI-1266173">
        <id>Q13362-2</id>
        <label>PPP2R5C</label>
    </interactant>
    <organismsDiffer>false</organismsDiffer>
    <experiments>4</experiments>
</comment>
<comment type="interaction">
    <interactant intactId="EBI-302388">
        <id>P30153</id>
    </interactant>
    <interactant intactId="EBI-396563">
        <id>Q14738</id>
        <label>PPP2R5D</label>
    </interactant>
    <organismsDiffer>false</organismsDiffer>
    <experiments>14</experiments>
</comment>
<comment type="interaction">
    <interactant intactId="EBI-302388">
        <id>P30153</id>
    </interactant>
    <interactant intactId="EBI-968374">
        <id>Q16537</id>
        <label>PPP2R5E</label>
    </interactant>
    <organismsDiffer>false</organismsDiffer>
    <experiments>9</experiments>
</comment>
<comment type="interaction">
    <interactant intactId="EBI-302388">
        <id>P30153</id>
    </interactant>
    <interactant intactId="EBI-1046072">
        <id>P60510</id>
        <label>PPP4C</label>
    </interactant>
    <organismsDiffer>false</organismsDiffer>
    <experiments>8</experiments>
</comment>
<comment type="interaction">
    <interactant intactId="EBI-302388">
        <id>P30153</id>
    </interactant>
    <interactant intactId="EBI-716663">
        <id>P53041</id>
        <label>PPP5C</label>
    </interactant>
    <organismsDiffer>false</organismsDiffer>
    <experiments>3</experiments>
</comment>
<comment type="interaction">
    <interactant intactId="EBI-302388">
        <id>P30153</id>
    </interactant>
    <interactant intactId="EBI-12164121">
        <id>Q15257-2</id>
        <label>PTPA</label>
    </interactant>
    <organismsDiffer>false</organismsDiffer>
    <experiments>3</experiments>
</comment>
<comment type="interaction">
    <interactant intactId="EBI-302388">
        <id>P30153</id>
    </interactant>
    <interactant intactId="EBI-73886">
        <id>Q04206</id>
        <label>RELA</label>
    </interactant>
    <organismsDiffer>false</organismsDiffer>
    <experiments>2</experiments>
</comment>
<comment type="interaction">
    <interactant intactId="EBI-302388">
        <id>P30153</id>
    </interactant>
    <interactant intactId="EBI-1046642">
        <id>O43815</id>
        <label>STRN</label>
    </interactant>
    <organismsDiffer>false</organismsDiffer>
    <experiments>10</experiments>
</comment>
<comment type="interaction">
    <interactant intactId="EBI-302388">
        <id>P30153</id>
    </interactant>
    <interactant intactId="EBI-1266294">
        <id>O43815-2</id>
        <label>STRN</label>
    </interactant>
    <organismsDiffer>false</organismsDiffer>
    <experiments>3</experiments>
</comment>
<comment type="interaction">
    <interactant intactId="EBI-302388">
        <id>P30153</id>
    </interactant>
    <interactant intactId="EBI-1053876">
        <id>Q13033-2</id>
        <label>STRN3</label>
    </interactant>
    <organismsDiffer>false</organismsDiffer>
    <experiments>9</experiments>
</comment>
<comment type="interaction">
    <interactant intactId="EBI-302388">
        <id>P30153</id>
    </interactant>
    <interactant intactId="EBI-366083">
        <id>P04637</id>
        <label>TP53</label>
    </interactant>
    <organismsDiffer>false</organismsDiffer>
    <experiments>3</experiments>
</comment>
<comment type="interaction">
    <interactant intactId="EBI-302388">
        <id>P30153</id>
    </interactant>
    <interactant intactId="EBI-866453">
        <id>P03129</id>
        <label>E7</label>
    </interactant>
    <organismsDiffer>true</organismsDiffer>
    <experiments>3</experiments>
</comment>
<comment type="interaction">
    <interactant intactId="EBI-302388">
        <id>P30153</id>
    </interactant>
    <interactant intactId="EBI-7005254">
        <id>P04020</id>
        <label>E7</label>
    </interactant>
    <organismsDiffer>true</organismsDiffer>
    <experiments>2</experiments>
</comment>
<comment type="interaction">
    <interactant intactId="EBI-302388">
        <id>P30153</id>
    </interactant>
    <interactant intactId="EBI-309684">
        <id>P97346</id>
        <label>Nxn</label>
    </interactant>
    <organismsDiffer>true</organismsDiffer>
    <experiments>2</experiments>
</comment>
<comment type="interaction">
    <interactant intactId="EBI-302388">
        <id>P30153</id>
    </interactant>
    <interactant intactId="EBI-1369292">
        <id>Q60996-3</id>
        <label>Ppp2r5c</label>
    </interactant>
    <organismsDiffer>true</organismsDiffer>
    <experiments>2</experiments>
</comment>
<comment type="interaction">
    <interactant intactId="EBI-302388">
        <id>P30153</id>
    </interactant>
    <interactant intactId="EBI-1266256">
        <id>P03081</id>
    </interactant>
    <organismsDiffer>true</organismsDiffer>
    <experiments>5</experiments>
</comment>
<comment type="subcellular location">
    <subcellularLocation>
        <location evidence="1">Cytoplasm</location>
    </subcellularLocation>
    <subcellularLocation>
        <location evidence="18 19 21">Nucleus</location>
    </subcellularLocation>
    <subcellularLocation>
        <location evidence="19 21">Chromosome</location>
    </subcellularLocation>
    <subcellularLocation>
        <location evidence="5">Chromosome</location>
        <location evidence="5">Centromere</location>
    </subcellularLocation>
    <subcellularLocation>
        <location evidence="4">Lateral cell membrane</location>
    </subcellularLocation>
    <subcellularLocation>
        <location evidence="4">Cell projection</location>
        <location evidence="4">Dendrite</location>
    </subcellularLocation>
    <text evidence="5 19 21">Centromeric localization requires the presence of BUB1 (PubMed:16580887). Recruited to chromatin and transcription pause-release checkpoint via its association with the Integrator complex (PubMed:34004147, PubMed:33243860).</text>
</comment>
<comment type="domain">
    <text>Each HEAT repeat appears to consist of two alpha helices joined by a hydrophilic region, the intrarepeat loop. The repeat units may be arranged laterally to form a rod-like structure.</text>
</comment>
<comment type="disease" evidence="13 14 24">
    <disease id="DI-04420">
        <name>Houge-Janssens syndrome 2</name>
        <acronym>HJS2</acronym>
        <description>An autosomal dominant disorder characterized by global developmental delay, hypotonia, variably impaired intellectual development, poor speech, and dysmorphic facial features. Some patients may develop seizures.</description>
        <dbReference type="MIM" id="616362"/>
    </disease>
    <text>The disease is caused by variants affecting the gene represented in this entry.</text>
</comment>
<comment type="similarity">
    <text evidence="29">Belongs to the phosphatase 2A regulatory subunit A family.</text>
</comment>
<reference key="1">
    <citation type="journal article" date="1989" name="Proc. Natl. Acad. Sci. U.S.A.">
        <title>Molecular cloning and sequence of cDNA encoding polyoma medium tumor antigen-associated 61-kDa protein.</title>
        <authorList>
            <person name="Walter G."/>
            <person name="Ferre F."/>
            <person name="Espiritu O."/>
            <person name="Carbone-Wiley A."/>
        </authorList>
    </citation>
    <scope>NUCLEOTIDE SEQUENCE [MRNA]</scope>
    <scope>PROTEIN SEQUENCE OF 242-255</scope>
    <source>
        <tissue>Placenta</tissue>
    </source>
</reference>
<reference key="2">
    <citation type="journal article" date="1990" name="Biochemistry">
        <title>Alpha- and beta-forms of the 65-kDa subunit of protein phosphatase 2A have a similar 39 amino acid repeating structure.</title>
        <authorList>
            <person name="Hemmings B.A."/>
            <person name="Adams-Pearson C."/>
            <person name="Maurer F."/>
            <person name="Mueller P."/>
            <person name="Goris J."/>
            <person name="Merlevede W."/>
            <person name="Hofsteenge J."/>
            <person name="Stone S.R."/>
        </authorList>
    </citation>
    <scope>NUCLEOTIDE SEQUENCE [MRNA]</scope>
</reference>
<reference key="3">
    <citation type="submission" date="2004-05" db="EMBL/GenBank/DDBJ databases">
        <title>Cloning of human full open reading frames in Gateway(TM) system entry vector (pDONR201).</title>
        <authorList>
            <person name="Ebert L."/>
            <person name="Schick M."/>
            <person name="Neubert P."/>
            <person name="Schatten R."/>
            <person name="Henze S."/>
            <person name="Korn B."/>
        </authorList>
    </citation>
    <scope>NUCLEOTIDE SEQUENCE [LARGE SCALE MRNA]</scope>
</reference>
<reference key="4">
    <citation type="journal article" date="2004" name="Genome Res.">
        <title>The status, quality, and expansion of the NIH full-length cDNA project: the Mammalian Gene Collection (MGC).</title>
        <authorList>
            <consortium name="The MGC Project Team"/>
        </authorList>
    </citation>
    <scope>NUCLEOTIDE SEQUENCE [LARGE SCALE MRNA]</scope>
    <source>
        <tissue>Colon</tissue>
    </source>
</reference>
<reference key="5">
    <citation type="submission" date="2007-03" db="UniProtKB">
        <authorList>
            <person name="Lubec G."/>
            <person name="Vishwanath V."/>
        </authorList>
    </citation>
    <scope>PROTEIN SEQUENCE OF 34-46</scope>
    <scope>IDENTIFICATION BY MASS SPECTROMETRY</scope>
    <source>
        <tissue>Brain</tissue>
        <tissue>Cajal-Retzius cell</tissue>
    </source>
</reference>
<reference key="6">
    <citation type="journal article" date="1996" name="Biochem. J.">
        <title>The variable subunit associated with protein phosphatase 2A0 defines a novel multimember family of regulatory subunits.</title>
        <authorList>
            <person name="Zolnierowicz S."/>
            <person name="van Hoof C."/>
            <person name="Andjelkovic N."/>
            <person name="Cron P."/>
            <person name="Stevens I."/>
            <person name="Merlevede W."/>
            <person name="Goris J."/>
            <person name="Hemmings B.A."/>
        </authorList>
    </citation>
    <scope>PROTEIN SEQUENCE OF 204-214; 261-272 AND 521-527</scope>
</reference>
<reference key="7">
    <citation type="journal article" date="1994" name="J. Virol.">
        <title>Molecular model of the A subunit of protein phosphatase 2A: interaction with other subunits and tumor antigens.</title>
        <authorList>
            <person name="Ruediger R."/>
            <person name="Hentz M."/>
            <person name="Fait J."/>
            <person name="Mumby M."/>
            <person name="Walter G."/>
        </authorList>
    </citation>
    <scope>BINDING DOMAINS</scope>
</reference>
<reference key="8">
    <citation type="journal article" date="2003" name="Biochem. Biophys. Res. Commun.">
        <title>Interaction between protein phosphatase 2A and members of the importin beta superfamily.</title>
        <authorList>
            <person name="Lubert E.J."/>
            <person name="Sarge K.D."/>
        </authorList>
    </citation>
    <scope>INTERACTION WITH IPO9</scope>
</reference>
<reference key="9">
    <citation type="journal article" date="2004" name="J. Biol. Chem.">
        <title>Galpha12 directly interacts with PP2A: evidence for Galpha12-stimulated PP2A phosphatase activity and dephosphorylation of microtubule-associated protein, tau.</title>
        <authorList>
            <person name="Zhu D."/>
            <person name="Kosik K.S."/>
            <person name="Meigs T.E."/>
            <person name="Yanamadala V."/>
            <person name="Denker B.M."/>
        </authorList>
    </citation>
    <scope>FUNCTION</scope>
    <scope>INTERACTION WITH GNA12</scope>
    <scope>SUBCELLULAR LOCATION</scope>
</reference>
<reference key="10">
    <citation type="journal article" date="2006" name="Dev. Cell">
        <title>PP2A is required for centromeric localization of Sgo1 and proper chromosome segregation.</title>
        <authorList>
            <person name="Tang Z."/>
            <person name="Shu H."/>
            <person name="Qi W."/>
            <person name="Mahmood N.A."/>
            <person name="Mumby M.C."/>
            <person name="Yu H."/>
        </authorList>
    </citation>
    <scope>IDENTIFICATION BY MASS SPECTROMETRY</scope>
    <scope>FUNCTION</scope>
    <scope>SUBCELLULAR LOCATION</scope>
    <scope>INTERACTION WITH SGO1</scope>
</reference>
<reference key="11">
    <citation type="journal article" date="2007" name="EMBO J.">
        <title>A specific PP2A regulatory subunit, B56gamma, mediates DNA damage-induced dephosphorylation of p53 at Thr55.</title>
        <authorList>
            <person name="Li H.H."/>
            <person name="Cai X."/>
            <person name="Shouse G.P."/>
            <person name="Piluso L.G."/>
            <person name="Liu X."/>
        </authorList>
    </citation>
    <scope>INTERACTION WITH TP53</scope>
</reference>
<reference key="12">
    <citation type="journal article" date="2007" name="J. Cell Sci.">
        <title>Mechanisms of the HRSL3 tumor suppressor function in ovarian carcinoma cells.</title>
        <authorList>
            <person name="Nazarenko I."/>
            <person name="Schafer R."/>
            <person name="Sers C."/>
        </authorList>
    </citation>
    <scope>INTERACTION WITH PLA2G16</scope>
</reference>
<reference key="13">
    <citation type="journal article" date="2008" name="J. Biol. Chem.">
        <title>Tesk1 interacts with Spry2 to abrogate its inhibition of ERK phosphorylation downstream of receptor tyrosine kinase signaling.</title>
        <authorList>
            <person name="Chandramouli S."/>
            <person name="Yu C.Y."/>
            <person name="Yusoff P."/>
            <person name="Lao D.H."/>
            <person name="Leong H.F."/>
            <person name="Mizuno K."/>
            <person name="Guy G.R."/>
        </authorList>
    </citation>
    <scope>INTERACTION WITH SPRY2</scope>
</reference>
<reference key="14">
    <citation type="journal article" date="2008" name="Virology">
        <title>Dephosphorylation of JC virus agnoprotein by protein phosphatase 2A: inhibition by small t antigen.</title>
        <authorList>
            <person name="Sariyer I.K."/>
            <person name="Khalili K."/>
            <person name="Safak M."/>
        </authorList>
    </citation>
    <scope>INTERACTION WITH JC VIRUS SMALL T ANTIGEN (MICROBIAL INFECTION)</scope>
</reference>
<reference key="15">
    <citation type="journal article" date="2009" name="Anal. Chem.">
        <title>Lys-N and trypsin cover complementary parts of the phosphoproteome in a refined SCX-based approach.</title>
        <authorList>
            <person name="Gauci S."/>
            <person name="Helbig A.O."/>
            <person name="Slijper M."/>
            <person name="Krijgsveld J."/>
            <person name="Heck A.J."/>
            <person name="Mohammed S."/>
        </authorList>
    </citation>
    <scope>ACETYLATION [LARGE SCALE ANALYSIS] AT ALA-2</scope>
    <scope>CLEAVAGE OF INITIATOR METHIONINE [LARGE SCALE ANALYSIS]</scope>
    <scope>IDENTIFICATION BY MASS SPECTROMETRY [LARGE SCALE ANALYSIS]</scope>
</reference>
<reference key="16">
    <citation type="journal article" date="2009" name="Mol. Cell. Proteomics">
        <title>A PP2A phosphatase high density interaction network identifies a novel striatin-interacting phosphatase and kinase complex linked to the cerebral cavernous malformation 3 (CCM3) protein.</title>
        <authorList>
            <person name="Goudreault M."/>
            <person name="D'Ambrosio L.M."/>
            <person name="Kean M.J."/>
            <person name="Mullin M.J."/>
            <person name="Larsen B.G."/>
            <person name="Sanchez A."/>
            <person name="Chaudhry S."/>
            <person name="Chen G.I."/>
            <person name="Sicheri F."/>
            <person name="Nesvizhskii A.I."/>
            <person name="Aebersold R."/>
            <person name="Raught B."/>
            <person name="Gingras A.C."/>
        </authorList>
    </citation>
    <scope>INTERACTION WITH CTTNBP2NL</scope>
    <scope>IDENTIFICATION IN STRIPAK COMPLEX</scope>
    <scope>FUNCTION</scope>
</reference>
<reference key="17">
    <citation type="journal article" date="2009" name="Science">
        <title>Lysine acetylation targets protein complexes and co-regulates major cellular functions.</title>
        <authorList>
            <person name="Choudhary C."/>
            <person name="Kumar C."/>
            <person name="Gnad F."/>
            <person name="Nielsen M.L."/>
            <person name="Rehman M."/>
            <person name="Walther T.C."/>
            <person name="Olsen J.V."/>
            <person name="Mann M."/>
        </authorList>
    </citation>
    <scope>ACETYLATION [LARGE SCALE ANALYSIS] AT LYS-280</scope>
    <scope>IDENTIFICATION BY MASS SPECTROMETRY [LARGE SCALE ANALYSIS]</scope>
</reference>
<reference key="18">
    <citation type="journal article" date="2010" name="PLoS ONE">
        <title>JC virus small T antigen binds phosphatase PP2A and Rb family proteins and is required for efficient viral DNA replication activity.</title>
        <authorList>
            <person name="Bollag B."/>
            <person name="Hofstetter C.A."/>
            <person name="Reviriego-Mendoza M.M."/>
            <person name="Frisque R.J."/>
        </authorList>
    </citation>
    <scope>INTERACTION WITH JC VIRUS SMALL T ANTIGEN (MICROBIAL INFECTION)</scope>
</reference>
<reference key="19">
    <citation type="journal article" date="2011" name="BMC Syst. Biol.">
        <title>Initial characterization of the human central proteome.</title>
        <authorList>
            <person name="Burkard T.R."/>
            <person name="Planyavsky M."/>
            <person name="Kaupe I."/>
            <person name="Breitwieser F.P."/>
            <person name="Buerckstuemmer T."/>
            <person name="Bennett K.L."/>
            <person name="Superti-Furga G."/>
            <person name="Colinge J."/>
        </authorList>
    </citation>
    <scope>IDENTIFICATION BY MASS SPECTROMETRY [LARGE SCALE ANALYSIS]</scope>
</reference>
<reference key="20">
    <citation type="journal article" date="2012" name="Mol. Cell. Proteomics">
        <title>Comparative large-scale characterisation of plant vs. mammal proteins reveals similar and idiosyncratic N-alpha acetylation features.</title>
        <authorList>
            <person name="Bienvenut W.V."/>
            <person name="Sumpton D."/>
            <person name="Martinez A."/>
            <person name="Lilla S."/>
            <person name="Espagne C."/>
            <person name="Meinnel T."/>
            <person name="Giglione C."/>
        </authorList>
    </citation>
    <scope>ACETYLATION [LARGE SCALE ANALYSIS] AT ALA-2</scope>
    <scope>CLEAVAGE OF INITIATOR METHIONINE [LARGE SCALE ANALYSIS]</scope>
    <scope>IDENTIFICATION BY MASS SPECTROMETRY [LARGE SCALE ANALYSIS]</scope>
</reference>
<reference key="21">
    <citation type="journal article" date="2012" name="Proc. Natl. Acad. Sci. U.S.A.">
        <title>N-terminal acetylome analyses and functional insights of the N-terminal acetyltransferase NatB.</title>
        <authorList>
            <person name="Van Damme P."/>
            <person name="Lasa M."/>
            <person name="Polevoda B."/>
            <person name="Gazquez C."/>
            <person name="Elosegui-Artola A."/>
            <person name="Kim D.S."/>
            <person name="De Juan-Pardo E."/>
            <person name="Demeyer K."/>
            <person name="Hole K."/>
            <person name="Larrea E."/>
            <person name="Timmerman E."/>
            <person name="Prieto J."/>
            <person name="Arnesen T."/>
            <person name="Sherman F."/>
            <person name="Gevaert K."/>
            <person name="Aldabe R."/>
        </authorList>
    </citation>
    <scope>ACETYLATION [LARGE SCALE ANALYSIS] AT ALA-2</scope>
    <scope>CLEAVAGE OF INITIATOR METHIONINE [LARGE SCALE ANALYSIS]</scope>
    <scope>IDENTIFICATION BY MASS SPECTROMETRY [LARGE SCALE ANALYSIS]</scope>
</reference>
<reference key="22">
    <citation type="journal article" date="2014" name="J. Proteomics">
        <title>An enzyme assisted RP-RPLC approach for in-depth analysis of human liver phosphoproteome.</title>
        <authorList>
            <person name="Bian Y."/>
            <person name="Song C."/>
            <person name="Cheng K."/>
            <person name="Dong M."/>
            <person name="Wang F."/>
            <person name="Huang J."/>
            <person name="Sun D."/>
            <person name="Wang L."/>
            <person name="Ye M."/>
            <person name="Zou H."/>
        </authorList>
    </citation>
    <scope>IDENTIFICATION BY MASS SPECTROMETRY [LARGE SCALE ANALYSIS]</scope>
    <source>
        <tissue>Liver</tissue>
    </source>
</reference>
<reference key="23">
    <citation type="journal article" date="2015" name="Proteomics">
        <title>N-terminome analysis of the human mitochondrial proteome.</title>
        <authorList>
            <person name="Vaca Jacome A.S."/>
            <person name="Rabilloud T."/>
            <person name="Schaeffer-Reiss C."/>
            <person name="Rompais M."/>
            <person name="Ayoub D."/>
            <person name="Lane L."/>
            <person name="Bairoch A."/>
            <person name="Van Dorsselaer A."/>
            <person name="Carapito C."/>
        </authorList>
    </citation>
    <scope>ACETYLATION [LARGE SCALE ANALYSIS] AT ALA-2</scope>
    <scope>CLEAVAGE OF INITIATOR METHIONINE [LARGE SCALE ANALYSIS]</scope>
    <scope>IDENTIFICATION BY MASS SPECTROMETRY [LARGE SCALE ANALYSIS]</scope>
</reference>
<reference key="24">
    <citation type="journal article" date="2016" name="Oncotarget">
        <title>FAM122A, a new endogenous inhibitor of protein phosphatase 2A.</title>
        <authorList>
            <person name="Fan L."/>
            <person name="Liu M.H."/>
            <person name="Guo M."/>
            <person name="Hu C.X."/>
            <person name="Yan Z.W."/>
            <person name="Chen J."/>
            <person name="Chen G.Q."/>
            <person name="Huang Y."/>
        </authorList>
    </citation>
    <scope>INTERACTION WITH PABIR1</scope>
</reference>
<reference key="25">
    <citation type="journal article" date="2017" name="Biol. Open">
        <title>Phosphatase-regulated recruitment of the spindle- and kinetochore-associated (Ska) complex to kinetochores.</title>
        <authorList>
            <person name="Sivakumar S."/>
            <person name="Gorbsky G.J."/>
        </authorList>
    </citation>
    <scope>FUNCTION</scope>
</reference>
<reference key="26">
    <citation type="journal article" date="2017" name="EMBO Rep.">
        <title>Oncoprotein CIP2A is stabilized via interaction with tumor suppressor PP2A/B56.</title>
        <authorList>
            <person name="Wang J."/>
            <person name="Okkeri J."/>
            <person name="Pavic K."/>
            <person name="Wang Z."/>
            <person name="Kauko O."/>
            <person name="Halonen T."/>
            <person name="Sarek G."/>
            <person name="Ojala P.M."/>
            <person name="Rao Z."/>
            <person name="Xu W."/>
            <person name="Westermarck J."/>
        </authorList>
    </citation>
    <scope>INTERACTION WITH CIP2A</scope>
</reference>
<reference key="27">
    <citation type="journal article" date="2018" name="IScience">
        <title>Mitogenic Signals Stimulate the CREB Coactivator CRTC3 through PP2A Recruitment.</title>
        <authorList>
            <person name="Sonntag T."/>
            <person name="Ostojic J."/>
            <person name="Vaughan J.M."/>
            <person name="Moresco J.J."/>
            <person name="Yoon Y.S."/>
            <person name="Yates J.R. III"/>
            <person name="Montminy M."/>
        </authorList>
    </citation>
    <scope>INTERACTION WITH CRTC3</scope>
    <scope>SUBCELLULAR LOCATION</scope>
</reference>
<reference key="28">
    <citation type="journal article" date="2021" name="Cell">
        <title>The PP2A-Integrator-CDK9 axis fine-tunes transcription and can be targeted therapeutically in cancer.</title>
        <authorList>
            <person name="Vervoort S.J."/>
            <person name="Welsh S.A."/>
            <person name="Devlin J.R."/>
            <person name="Barbieri E."/>
            <person name="Knight D.A."/>
            <person name="Offley S."/>
            <person name="Bjelosevic S."/>
            <person name="Costacurta M."/>
            <person name="Todorovski I."/>
            <person name="Kearney C.J."/>
            <person name="Sandow J.J."/>
            <person name="Fan Z."/>
            <person name="Blyth B."/>
            <person name="McLeod V."/>
            <person name="Vissers J.H.A."/>
            <person name="Pavic K."/>
            <person name="Martin B.P."/>
            <person name="Gregory G."/>
            <person name="Demosthenous E."/>
            <person name="Zethoven M."/>
            <person name="Kong I.Y."/>
            <person name="Hawkins E.D."/>
            <person name="Hogg S.J."/>
            <person name="Kelly M.J."/>
            <person name="Newbold A."/>
            <person name="Simpson K.J."/>
            <person name="Kauko O."/>
            <person name="Harvey K.F."/>
            <person name="Ohlmeyer M."/>
            <person name="Westermarck J."/>
            <person name="Gray N."/>
            <person name="Gardini A."/>
            <person name="Johnstone R.W."/>
        </authorList>
    </citation>
    <scope>FUNCTION</scope>
    <scope>IDENTIFICATION IN THE INTAC COMPLEX</scope>
    <scope>SUBCELLULAR LOCATION</scope>
</reference>
<reference key="29">
    <citation type="journal article" date="1999" name="Cell">
        <title>The structure of the protein phosphatase 2A PR65/A subunit reveals the conformation of its 15 tandemly repeated HEAT motifs.</title>
        <authorList>
            <person name="Groves M.R."/>
            <person name="Hanlon N."/>
            <person name="Turowski P."/>
            <person name="Hemmings B.A."/>
            <person name="Barford D."/>
        </authorList>
    </citation>
    <scope>X-RAY CRYSTALLOGRAPHY (2.3 ANGSTROMS)</scope>
</reference>
<reference key="30">
    <citation type="journal article" date="2008" name="Cell">
        <title>Structural mechanism of demethylation and inactivation of protein phosphatase 2A.</title>
        <authorList>
            <person name="Xing Y."/>
            <person name="Li Z."/>
            <person name="Chen Y."/>
            <person name="Stock J.B."/>
            <person name="Jeffrey P.D."/>
            <person name="Shi Y."/>
        </authorList>
    </citation>
    <scope>X-RAY CRYSTALLOGRAPHY (2.8 ANGSTROMS) OF 9-589 IN COMPLEX WITH PPP2CA AND PPME1</scope>
</reference>
<reference evidence="31" key="31">
    <citation type="journal article" date="2020" name="Science">
        <title>Identification of Integrator-PP2A complex (INTAC), an RNA polymerase II phosphatase.</title>
        <authorList>
            <person name="Zheng H."/>
            <person name="Qi Y."/>
            <person name="Hu S."/>
            <person name="Cao X."/>
            <person name="Xu C."/>
            <person name="Yin Z."/>
            <person name="Chen X."/>
            <person name="Li Y."/>
            <person name="Liu W."/>
            <person name="Li J."/>
            <person name="Wang J."/>
            <person name="Wei G."/>
            <person name="Liang K."/>
            <person name="Chen F.X."/>
            <person name="Xu Y."/>
        </authorList>
    </citation>
    <scope>STRUCTURE BY ELECTRON MICROSCOPY (3.50 ANGSTROMS) OF INTAC COMPLEX</scope>
    <scope>FUNCTION</scope>
    <scope>IDENTIFICATION IN THE INTAC COMPLEX</scope>
    <scope>SUBCELLULAR LOCATION</scope>
</reference>
<reference evidence="32" key="32">
    <citation type="journal article" date="2021" name="Nat. Struct. Mol. Biol.">
        <title>Cryo-EM structure of the Hippo signaling integrator human STRIPAK.</title>
        <authorList>
            <person name="Jeong B.C."/>
            <person name="Bae S.J."/>
            <person name="Ni L."/>
            <person name="Zhang X."/>
            <person name="Bai X.C."/>
            <person name="Luo X."/>
        </authorList>
    </citation>
    <scope>STRUCTURE BY ELECTRON MICROSCOPY (3.30 ANGSTROMS) IN THE STRIPAK COMPLEX</scope>
    <scope>SUBUNIT</scope>
    <scope>FUNCTION</scope>
</reference>
<reference evidence="33" key="33">
    <citation type="journal article" date="2021" name="Science">
        <title>Structural basis of Integrator-mediated transcription regulation.</title>
        <authorList>
            <person name="Fianu I."/>
            <person name="Chen Y."/>
            <person name="Dienemann C."/>
            <person name="Dybkov O."/>
            <person name="Linden A."/>
            <person name="Urlaub H."/>
            <person name="Cramer P."/>
        </authorList>
    </citation>
    <scope>STRUCTURE BY ELECTRON MICROSCOPY (3.60 ANGSTROMS) OF INTAC COMPLEX</scope>
    <scope>IDENTIFICATION IN THE INTAC COMPLEX</scope>
</reference>
<reference evidence="34" key="34">
    <citation type="journal article" date="2023" name="Protein Cell">
        <title>Structural basis of INTAC-regulated transcription.</title>
        <authorList>
            <person name="Zheng H."/>
            <person name="Jin Q."/>
            <person name="Wang X."/>
            <person name="Qi Y."/>
            <person name="Liu W."/>
            <person name="Ren Y."/>
            <person name="Zhao D."/>
            <person name="Xavier Chen F."/>
            <person name="Cheng J."/>
            <person name="Chen X."/>
            <person name="Xu Y."/>
        </authorList>
    </citation>
    <scope>STRUCTURE BY ELECTRON MICROSCOPY (4.18 ANGSTROMS) OF INTAC COMPLEX</scope>
    <scope>IDENTIFICATION IN THE INTAC COMPLEX</scope>
</reference>
<reference evidence="38 39 40 41" key="35">
    <citation type="journal article" date="2024" name="Nature">
        <title>Cryo-EM structures of PP2A:B55-FAM122A and PP2A:B55-ARPP19.</title>
        <authorList>
            <person name="Padi S.K.R."/>
            <person name="Vos M.R."/>
            <person name="Godek R.J."/>
            <person name="Fuller J.R."/>
            <person name="Kruse T."/>
            <person name="Hein J.B."/>
            <person name="Nilsson J."/>
            <person name="Kelker M.S."/>
            <person name="Page R."/>
            <person name="Peti W."/>
        </authorList>
    </citation>
    <scope>STRUCTURE BY ELECTRON MICROSCOPY (2.55 ANGSTROMS) OF 9-589 IN COMPLEXES WITH PPP2CA; PPP2R2A; ARPP19 AND PABIR1/FAM122A</scope>
    <scope>INTERACTION WITH PPP2CA AND PPP2R1A</scope>
    <scope>HEAT REPEATS</scope>
</reference>
<reference evidence="35 36 37" key="36">
    <citation type="journal article" date="2024" name="Nature">
        <title>Structural basis of Integrator-dependent RNA polymerase II termination.</title>
        <authorList>
            <person name="Fianu I."/>
            <person name="Ochmann M."/>
            <person name="Walshe J.L."/>
            <person name="Dybkov O."/>
            <person name="Cruz J.N."/>
            <person name="Urlaub H."/>
            <person name="Cramer P."/>
        </authorList>
    </citation>
    <scope>STRUCTURE BY ELECTRON MICROSCOPY (3.10 ANGSTROMS) OF INTAC COMPLEX</scope>
    <scope>IDENTIFICATION IN THE INTAC COMPLEX</scope>
</reference>
<reference key="37">
    <citation type="journal article" date="2015" name="J. Clin. Invest.">
        <title>B56delta-related protein phosphatase 2A dysfunction identified in patients with intellectual disability.</title>
        <authorList>
            <person name="Houge G."/>
            <person name="Haesen D."/>
            <person name="Vissers L.E."/>
            <person name="Mehta S."/>
            <person name="Parker M.J."/>
            <person name="Wright M."/>
            <person name="Vogt J."/>
            <person name="McKee S."/>
            <person name="Tolmie J.L."/>
            <person name="Cordeiro N."/>
            <person name="Kleefstra T."/>
            <person name="Willemsen M.H."/>
            <person name="Reijnders M.R."/>
            <person name="Berland S."/>
            <person name="Hayman E."/>
            <person name="Lahat E."/>
            <person name="Brilstra E.H."/>
            <person name="van Gassen K.L."/>
            <person name="Zonneveld-Huijssoon E."/>
            <person name="de Bie C.I."/>
            <person name="Hoischen A."/>
            <person name="Eichler E.E."/>
            <person name="Holdhus R."/>
            <person name="Steen V.M."/>
            <person name="Doeskeland S.O."/>
            <person name="Hurles M.E."/>
            <person name="FitzPatrick D.R."/>
            <person name="Janssens V."/>
        </authorList>
    </citation>
    <scope>VARIANTS HJS2 LEU-179; TRP-182 AND HIS-258</scope>
    <scope>CHARACTERIZATION HJS2 OF VARIANTS LEU-179; TRP-182 AND HIS-258</scope>
</reference>
<reference key="38">
    <citation type="journal article" date="2015" name="Nature">
        <title>Large-scale discovery of novel genetic causes of developmental disorders.</title>
        <authorList>
            <consortium name="Deciphering Developmental Disorders Study"/>
        </authorList>
    </citation>
    <scope>INVOLVEMENT IN HJS2</scope>
    <scope>VARIANT HJS2 LEU-132</scope>
</reference>
<reference key="39">
    <citation type="journal article" date="2023" name="Genes (Basel)">
        <title>Novel Variants of PPP2R1A in Catalytic Subunit Binding Domain and Genotype-Phenotype Analysis in Neurodevelopmentally Delayed Patients.</title>
        <authorList>
            <person name="Qian Y."/>
            <person name="Jiang Y."/>
            <person name="Wang J."/>
            <person name="Li G."/>
            <person name="Wu B."/>
            <person name="Zhou Y."/>
            <person name="Xu X."/>
            <person name="Wang H."/>
        </authorList>
    </citation>
    <scope>VARIANTS HJS2 VAL-180; THR-180; ALA-470 AND LEU-498</scope>
    <scope>CHARACTERIZATION OF VARIANTS HJS2 THR-180; ALA-470 AND LEU-498</scope>
    <scope>INTERACTION WITH PPP2R5D AND PPP2CA</scope>
</reference>
<protein>
    <recommendedName>
        <fullName>Serine/threonine-protein phosphatase 2A 65 kDa regulatory subunit A alpha isoform</fullName>
        <shortName evidence="28">PP2Aa</shortName>
    </recommendedName>
    <alternativeName>
        <fullName>Medium tumor antigen-associated 61 kDa protein</fullName>
    </alternativeName>
    <alternativeName>
        <fullName>PP2A subunit A isoform PR65-alpha</fullName>
    </alternativeName>
    <alternativeName>
        <fullName>PP2A subunit A isoform R1-alpha</fullName>
    </alternativeName>
</protein>